<reference key="1">
    <citation type="journal article" date="1999" name="Genomics">
        <title>Cloning and chromosomal mapping of the human DNA polymerase theta (POLQ), the eighth human DNA polymerase.</title>
        <authorList>
            <person name="Sharief F.S."/>
            <person name="Vojta P.J."/>
            <person name="Ropp P.A."/>
            <person name="Copeland W.C."/>
        </authorList>
    </citation>
    <scope>NUCLEOTIDE SEQUENCE [MRNA] (ISOFORM 2)</scope>
    <source>
        <tissue>Spleen</tissue>
    </source>
</reference>
<reference key="2">
    <citation type="journal article" date="2003" name="Nucleic Acids Res.">
        <title>POLQ (Pol theta), a DNA polymerase and DNA-dependent ATPase in human cells.</title>
        <authorList>
            <person name="Seki M."/>
            <person name="Marini F."/>
            <person name="Wood R.D."/>
        </authorList>
    </citation>
    <scope>NUCLEOTIDE SEQUENCE [MRNA] (ISOFORM 1)</scope>
    <scope>FUNCTION</scope>
    <scope>TISSUE SPECIFICITY</scope>
    <scope>CATALYTIC ACTIVITY</scope>
</reference>
<reference key="3">
    <citation type="journal article" date="2006" name="Nature">
        <title>The DNA sequence, annotation and analysis of human chromosome 3.</title>
        <authorList>
            <person name="Muzny D.M."/>
            <person name="Scherer S.E."/>
            <person name="Kaul R."/>
            <person name="Wang J."/>
            <person name="Yu J."/>
            <person name="Sudbrak R."/>
            <person name="Buhay C.J."/>
            <person name="Chen R."/>
            <person name="Cree A."/>
            <person name="Ding Y."/>
            <person name="Dugan-Rocha S."/>
            <person name="Gill R."/>
            <person name="Gunaratne P."/>
            <person name="Harris R.A."/>
            <person name="Hawes A.C."/>
            <person name="Hernandez J."/>
            <person name="Hodgson A.V."/>
            <person name="Hume J."/>
            <person name="Jackson A."/>
            <person name="Khan Z.M."/>
            <person name="Kovar-Smith C."/>
            <person name="Lewis L.R."/>
            <person name="Lozado R.J."/>
            <person name="Metzker M.L."/>
            <person name="Milosavljevic A."/>
            <person name="Miner G.R."/>
            <person name="Morgan M.B."/>
            <person name="Nazareth L.V."/>
            <person name="Scott G."/>
            <person name="Sodergren E."/>
            <person name="Song X.-Z."/>
            <person name="Steffen D."/>
            <person name="Wei S."/>
            <person name="Wheeler D.A."/>
            <person name="Wright M.W."/>
            <person name="Worley K.C."/>
            <person name="Yuan Y."/>
            <person name="Zhang Z."/>
            <person name="Adams C.Q."/>
            <person name="Ansari-Lari M.A."/>
            <person name="Ayele M."/>
            <person name="Brown M.J."/>
            <person name="Chen G."/>
            <person name="Chen Z."/>
            <person name="Clendenning J."/>
            <person name="Clerc-Blankenburg K.P."/>
            <person name="Chen R."/>
            <person name="Chen Z."/>
            <person name="Davis C."/>
            <person name="Delgado O."/>
            <person name="Dinh H.H."/>
            <person name="Dong W."/>
            <person name="Draper H."/>
            <person name="Ernst S."/>
            <person name="Fu G."/>
            <person name="Gonzalez-Garay M.L."/>
            <person name="Garcia D.K."/>
            <person name="Gillett W."/>
            <person name="Gu J."/>
            <person name="Hao B."/>
            <person name="Haugen E."/>
            <person name="Havlak P."/>
            <person name="He X."/>
            <person name="Hennig S."/>
            <person name="Hu S."/>
            <person name="Huang W."/>
            <person name="Jackson L.R."/>
            <person name="Jacob L.S."/>
            <person name="Kelly S.H."/>
            <person name="Kube M."/>
            <person name="Levy R."/>
            <person name="Li Z."/>
            <person name="Liu B."/>
            <person name="Liu J."/>
            <person name="Liu W."/>
            <person name="Lu J."/>
            <person name="Maheshwari M."/>
            <person name="Nguyen B.-V."/>
            <person name="Okwuonu G.O."/>
            <person name="Palmeiri A."/>
            <person name="Pasternak S."/>
            <person name="Perez L.M."/>
            <person name="Phelps K.A."/>
            <person name="Plopper F.J."/>
            <person name="Qiang B."/>
            <person name="Raymond C."/>
            <person name="Rodriguez R."/>
            <person name="Saenphimmachak C."/>
            <person name="Santibanez J."/>
            <person name="Shen H."/>
            <person name="Shen Y."/>
            <person name="Subramanian S."/>
            <person name="Tabor P.E."/>
            <person name="Verduzco D."/>
            <person name="Waldron L."/>
            <person name="Wang J."/>
            <person name="Wang J."/>
            <person name="Wang Q."/>
            <person name="Williams G.A."/>
            <person name="Wong G.K.-S."/>
            <person name="Yao Z."/>
            <person name="Zhang J."/>
            <person name="Zhang X."/>
            <person name="Zhao G."/>
            <person name="Zhou J."/>
            <person name="Zhou Y."/>
            <person name="Nelson D."/>
            <person name="Lehrach H."/>
            <person name="Reinhardt R."/>
            <person name="Naylor S.L."/>
            <person name="Yang H."/>
            <person name="Olson M."/>
            <person name="Weinstock G."/>
            <person name="Gibbs R.A."/>
        </authorList>
    </citation>
    <scope>NUCLEOTIDE SEQUENCE [LARGE SCALE GENOMIC DNA]</scope>
</reference>
<reference key="4">
    <citation type="submission" date="1998-01" db="EMBL/GenBank/DDBJ databases">
        <title>Catalytic activity of Pol eta, a new human DNA polymerase related to the bacterial DNA polymerase I family and Drosophila Mus308.</title>
        <authorList>
            <person name="Harris P.V."/>
            <person name="Kaelin C.B."/>
            <person name="Burtis K.C."/>
        </authorList>
    </citation>
    <scope>NUCLEOTIDE SEQUENCE [MRNA] OF 1435-2590</scope>
</reference>
<reference key="5">
    <citation type="journal article" date="2008" name="Nucleic Acids Res.">
        <title>Low-fidelity DNA synthesis by human DNA polymerase theta.</title>
        <authorList>
            <person name="Arana M.E."/>
            <person name="Seki M."/>
            <person name="Wood R.D."/>
            <person name="Rogozin I.B."/>
            <person name="Kunkel T.A."/>
        </authorList>
    </citation>
    <scope>FUNCTION</scope>
</reference>
<reference key="6">
    <citation type="journal article" date="2009" name="Nucleic Acids Res.">
        <title>Human DNA polymerase theta possesses 5'-dRP lyase activity and functions in single-nucleotide base excision repair in vitro.</title>
        <authorList>
            <person name="Prasad R."/>
            <person name="Longley M.J."/>
            <person name="Sharief F.S."/>
            <person name="Hou E.W."/>
            <person name="Copeland W.C."/>
            <person name="Wilson S.H."/>
        </authorList>
    </citation>
    <scope>FUNCTION</scope>
    <scope>MUTAGENESIS OF 2540-ASP-GLU-2541</scope>
</reference>
<reference key="7">
    <citation type="journal article" date="2009" name="Science">
        <title>Lysine acetylation targets protein complexes and co-regulates major cellular functions.</title>
        <authorList>
            <person name="Choudhary C."/>
            <person name="Kumar C."/>
            <person name="Gnad F."/>
            <person name="Nielsen M.L."/>
            <person name="Rehman M."/>
            <person name="Walther T.C."/>
            <person name="Olsen J.V."/>
            <person name="Mann M."/>
        </authorList>
    </citation>
    <scope>ACETYLATION [LARGE SCALE ANALYSIS] AT LYS-990</scope>
    <scope>IDENTIFICATION BY MASS SPECTROMETRY [LARGE SCALE ANALYSIS]</scope>
</reference>
<reference key="8">
    <citation type="journal article" date="2010" name="Oncotarget">
        <title>Overexpression of POLQ confers a poor prognosis in early breast cancer patients.</title>
        <authorList>
            <person name="Higgins G.S."/>
            <person name="Harris A.L."/>
            <person name="Prevo R."/>
            <person name="Helleday T."/>
            <person name="McKenna W.G."/>
            <person name="Buffa F.M."/>
        </authorList>
    </citation>
    <scope>INVOLVEMENT IN BC</scope>
</reference>
<reference key="9">
    <citation type="journal article" date="2010" name="Proc. Natl. Acad. Sci. U.S.A.">
        <title>DNA polymerase theta up-regulation is associated with poor survival in breast cancer, perturbs DNA replication, and promotes genetic instability.</title>
        <authorList>
            <person name="Lemee F."/>
            <person name="Bergoglio V."/>
            <person name="Fernandez-Vidal A."/>
            <person name="Machado-Silva A."/>
            <person name="Pillaire M.J."/>
            <person name="Bieth A."/>
            <person name="Gentil C."/>
            <person name="Baker L."/>
            <person name="Martin A.L."/>
            <person name="Leduc C."/>
            <person name="Lam E."/>
            <person name="Magdeleine E."/>
            <person name="Filleron T."/>
            <person name="Oumouhou N."/>
            <person name="Kaina B."/>
            <person name="Seki M."/>
            <person name="Grimal F."/>
            <person name="Lacroix-Triki M."/>
            <person name="Thompson A."/>
            <person name="Roche H."/>
            <person name="Bourdon J.C."/>
            <person name="Wood R.D."/>
            <person name="Hoffmann J.S."/>
            <person name="Cazaux C."/>
        </authorList>
    </citation>
    <scope>INVOLVEMENT IN BC</scope>
</reference>
<reference key="10">
    <citation type="journal article" date="2011" name="J. Mol. Biol.">
        <title>Lesion bypass activity of DNA polymerase theta (POLQ) is an intrinsic property of the pol domain and depends on unique sequence inserts.</title>
        <authorList>
            <person name="Hogg M."/>
            <person name="Seki M."/>
            <person name="Wood R.D."/>
            <person name="Doublie S."/>
            <person name="Wallace S.S."/>
        </authorList>
    </citation>
    <scope>FUNCTION</scope>
</reference>
<reference key="11">
    <citation type="journal article" date="2012" name="Nucleic Acids Res.">
        <title>Promiscuous DNA synthesis by human DNA polymerase theta.</title>
        <authorList>
            <person name="Hogg M."/>
            <person name="Sauer-Eriksson A.E."/>
            <person name="Johansson E."/>
        </authorList>
    </citation>
    <scope>FUNCTION</scope>
    <scope>CATALYTIC ACTIVITY</scope>
    <scope>BIOPHYSICOCHEMICAL PROPERTIES</scope>
</reference>
<reference key="12">
    <citation type="journal article" date="2014" name="BMC Cancer">
        <title>A DNA repair variant in POLQ (c.-1060A &gt; G) is associated to hereditary breast cancer patients: a case-control study.</title>
        <authorList>
            <person name="Brandalize A.P."/>
            <person name="Schueler-Faccini L."/>
            <person name="Hoffmann J.S."/>
            <person name="Caleffi M."/>
            <person name="Cazaux C."/>
            <person name="Ashton-Prolla P."/>
        </authorList>
    </citation>
    <scope>INVOLVEMENT IN BC</scope>
</reference>
<reference key="13">
    <citation type="journal article" date="2014" name="J. Biol. Chem.">
        <title>A role for DNA polymerase theta in promoting replication through oxidative DNA lesion, thymine glycol, in human cells.</title>
        <authorList>
            <person name="Yoon J.H."/>
            <person name="Roy Choudhury J."/>
            <person name="Park J."/>
            <person name="Prakash S."/>
            <person name="Prakash L."/>
        </authorList>
    </citation>
    <scope>FUNCTION</scope>
    <scope>MUTAGENESIS OF 2540-ASP-GLU-2541</scope>
</reference>
<reference key="14">
    <citation type="journal article" date="2014" name="Nat. Commun.">
        <title>A role for DNA polymerase theta in the timing of DNA replication.</title>
        <authorList>
            <person name="Fernandez-Vidal A."/>
            <person name="Guitton-Sert L."/>
            <person name="Cadoret J.C."/>
            <person name="Drac M."/>
            <person name="Schwob E."/>
            <person name="Baldacci G."/>
            <person name="Cazaux C."/>
            <person name="Hoffmann J.S."/>
        </authorList>
    </citation>
    <scope>SUBCELLULAR LOCATION</scope>
    <scope>INTERACTION WITH ORC2 AND ORC4</scope>
</reference>
<reference key="15">
    <citation type="journal article" date="2015" name="Nature">
        <title>Homologous-recombination-deficient tumours are dependent on Poltheta-mediated repair.</title>
        <authorList>
            <person name="Ceccaldi R."/>
            <person name="Liu J.C."/>
            <person name="Amunugama R."/>
            <person name="Hajdu I."/>
            <person name="Primack B."/>
            <person name="Petalcorin M.I."/>
            <person name="O'Connor K.W."/>
            <person name="Konstantinopoulos P.A."/>
            <person name="Elledge S.J."/>
            <person name="Boulton S.J."/>
            <person name="Yusufzai T."/>
            <person name="D'Andrea A.D."/>
        </authorList>
    </citation>
    <scope>FUNCTION</scope>
    <scope>INTERACTION WITH RAD51</scope>
    <scope>SUBCELLULAR LOCATION</scope>
</reference>
<reference key="16">
    <citation type="journal article" date="2015" name="Nat. Struct. Mol. Biol.">
        <title>Mechanism of microhomology-mediated end-joining promoted by human DNA polymerase theta.</title>
        <authorList>
            <person name="Kent T."/>
            <person name="Chandramouly G."/>
            <person name="McDevitt S.M."/>
            <person name="Ozdemir A.Y."/>
            <person name="Pomerantz R.T."/>
        </authorList>
    </citation>
    <scope>FUNCTION</scope>
    <scope>SUBUNIT</scope>
    <scope>DOMAIN</scope>
</reference>
<reference key="17">
    <citation type="journal article" date="2016" name="Elife">
        <title>Polymerase theta is a robust terminal transferase that oscillates between three different mechanisms during end-joining.</title>
        <authorList>
            <person name="Kent T."/>
            <person name="Mateos-Gomez P.A."/>
            <person name="Sfeir A."/>
            <person name="Pomerantz R.T."/>
        </authorList>
    </citation>
    <scope>FUNCTION</scope>
    <scope>CATALYTIC ACTIVITY</scope>
    <scope>COFACTOR</scope>
    <scope>MUTAGENESIS OF ARG-2202 AND ARG-2254</scope>
</reference>
<reference key="18">
    <citation type="journal article" date="2016" name="Nucleic Acids Res.">
        <title>DNA polymerase theta specializes in incorporating synthetic expanded-size (xDNA) nucleotides.</title>
        <authorList>
            <person name="Kent T."/>
            <person name="Rusanov T.D."/>
            <person name="Hoang T.M."/>
            <person name="Velema W.A."/>
            <person name="Krueger A.T."/>
            <person name="Copeland W.C."/>
            <person name="Kool E.T."/>
            <person name="Pomerantz R.T."/>
        </authorList>
    </citation>
    <scope>FUNCTION</scope>
    <scope>CATALYTIC ACTIVITY</scope>
</reference>
<reference key="19">
    <citation type="journal article" date="2017" name="Nat. Commun.">
        <title>Dual loss of human POLQ and LIG4 abolishes random integration.</title>
        <authorList>
            <person name="Saito S."/>
            <person name="Maeda R."/>
            <person name="Adachi N."/>
        </authorList>
    </citation>
    <scope>FUNCTION</scope>
</reference>
<reference key="20">
    <citation type="journal article" date="2019" name="J. Biol. Chem.">
        <title>DNA polymerase theta (POLQ) is important for repair of DNA double-strand breaks caused by fork collapse.</title>
        <authorList>
            <person name="Wang Z."/>
            <person name="Song Y."/>
            <person name="Li S."/>
            <person name="Kurian S."/>
            <person name="Xiang R."/>
            <person name="Chiba T."/>
            <person name="Wu X."/>
        </authorList>
    </citation>
    <scope>FUNCTION</scope>
</reference>
<reference key="21">
    <citation type="journal article" date="2019" name="Nat. Commun.">
        <title>Molecular basis of microhomology-mediated end-joining by purified full-length Poltheta.</title>
        <authorList>
            <person name="Black S.J."/>
            <person name="Ozdemir A.Y."/>
            <person name="Kashkina E."/>
            <person name="Kent T."/>
            <person name="Rusanov T."/>
            <person name="Ristic D."/>
            <person name="Shin Y."/>
            <person name="Suma A."/>
            <person name="Hoang T."/>
            <person name="Chandramouly G."/>
            <person name="Siddique L.A."/>
            <person name="Borisonnik N."/>
            <person name="Sullivan-Reed K."/>
            <person name="Mallon J.S."/>
            <person name="Skorski T."/>
            <person name="Carnevale V."/>
            <person name="Murakami K.S."/>
            <person name="Wyman C."/>
            <person name="Pomerantz R.T."/>
        </authorList>
    </citation>
    <scope>FUNCTION</scope>
    <scope>CATALYTIC ACTIVITY</scope>
    <scope>SUBUNIT</scope>
    <scope>MUTAGENESIS OF LYS-121</scope>
</reference>
<reference key="22">
    <citation type="journal article" date="2020" name="Proc. Natl. Acad. Sci. U.S.A.">
        <title>Mechanistic basis for microhomology identification and genome scarring by polymerase theta.</title>
        <authorList>
            <person name="Carvajal-Garcia J."/>
            <person name="Cho J.E."/>
            <person name="Carvajal-Garcia P."/>
            <person name="Feng W."/>
            <person name="Wood R.D."/>
            <person name="Sekelsky J."/>
            <person name="Gupta G.P."/>
            <person name="Roberts S.A."/>
            <person name="Ramsden D.A."/>
        </authorList>
    </citation>
    <scope>FUNCTION</scope>
</reference>
<reference key="23">
    <citation type="journal article" date="2020" name="Proc. Natl. Acad. Sci. U.S.A.">
        <title>POLQ suppresses interhomolog recombination and loss of heterozygosity at targeted DNA breaks.</title>
        <authorList>
            <person name="Davis L."/>
            <person name="Khoo K.J."/>
            <person name="Zhang Y."/>
            <person name="Maizels N."/>
        </authorList>
    </citation>
    <scope>FUNCTION</scope>
</reference>
<reference key="24">
    <citation type="journal article" date="2021" name="Mol. Cell">
        <title>Human DNA polymerase theta harbors DNA end-trimming activity critical for DNA repair.</title>
        <authorList>
            <person name="Zahn K.E."/>
            <person name="Jensen R.B."/>
            <person name="Wood R.D."/>
            <person name="Doublie S."/>
        </authorList>
    </citation>
    <scope>RETRACTED PAPER</scope>
</reference>
<reference key="25">
    <citation type="journal article" date="2024" name="Mol. Cell">
        <title>Retraction Notice to: Human DNA polymerase theta harbors DNA end-trimming activity critical for DNA repair.</title>
        <authorList>
            <person name="Zahn K.E."/>
            <person name="Jensen R.B."/>
            <person name="Wood R.D."/>
            <person name="Doublie S."/>
        </authorList>
    </citation>
    <scope>RETRACTION NOTICE OF PUBMED:33577776</scope>
</reference>
<reference key="26">
    <citation type="journal article" date="2021" name="Nat. Cancer">
        <title>A first-in-class Polymerase Theta Inhibitor selectively targets Homologous-Recombination-Deficient Tumors.</title>
        <authorList>
            <person name="Zhou J."/>
            <person name="Gelot C."/>
            <person name="Pantelidou C."/>
            <person name="Li A."/>
            <person name="Yuecel H."/>
            <person name="Davis R.E."/>
            <person name="Faerkkilae A."/>
            <person name="Kochupurakkal B."/>
            <person name="Syed A."/>
            <person name="Shapiro G.I."/>
            <person name="Tainer J.A."/>
            <person name="Blagg B.S.J."/>
            <person name="Ceccaldi R."/>
            <person name="D'Andrea A.D."/>
        </authorList>
    </citation>
    <scope>FUNCTION</scope>
    <scope>ACTIVITY REGULATION</scope>
    <scope>SUBCELLULAR LOCATION</scope>
</reference>
<reference key="27">
    <citation type="journal article" date="2021" name="Nat. Commun.">
        <title>Poltheta inhibitors elicit BRCA-gene synthetic lethality and target PARP inhibitor resistance.</title>
        <authorList>
            <person name="Zatreanu D."/>
            <person name="Robinson H.M.R."/>
            <person name="Alkhatib O."/>
            <person name="Boursier M."/>
            <person name="Finch H."/>
            <person name="Geo L."/>
            <person name="Grande D."/>
            <person name="Grinkevich V."/>
            <person name="Heald R.A."/>
            <person name="Langdon S."/>
            <person name="Majithiya J."/>
            <person name="McWhirter C."/>
            <person name="Martin N.M.B."/>
            <person name="Moore S."/>
            <person name="Neves J."/>
            <person name="Rajendra E."/>
            <person name="Ranzani M."/>
            <person name="Schaedler T."/>
            <person name="Stockley M."/>
            <person name="Wiggins K."/>
            <person name="Brough R."/>
            <person name="Sridhar S."/>
            <person name="Gulati A."/>
            <person name="Shao N."/>
            <person name="Badder L.M."/>
            <person name="Novo D."/>
            <person name="Knight E.G."/>
            <person name="Marlow R."/>
            <person name="Haider S."/>
            <person name="Callen E."/>
            <person name="Hewitt G."/>
            <person name="Schimmel J."/>
            <person name="Prevo R."/>
            <person name="Alli C."/>
            <person name="Ferdinand A."/>
            <person name="Bell C."/>
            <person name="Blencowe P."/>
            <person name="Bot C."/>
            <person name="Calder M."/>
            <person name="Charles M."/>
            <person name="Curry J."/>
            <person name="Ekwuru T."/>
            <person name="Ewings K."/>
            <person name="Krajewski W."/>
            <person name="MacDonald E."/>
            <person name="McCarron H."/>
            <person name="Pang L."/>
            <person name="Pedder C."/>
            <person name="Rigoreau L."/>
            <person name="Swarbrick M."/>
            <person name="Wheatley E."/>
            <person name="Willis S."/>
            <person name="Wong A.C."/>
            <person name="Nussenzweig A."/>
            <person name="Tijsterman M."/>
            <person name="Tutt A."/>
            <person name="Boulton S.J."/>
            <person name="Higgins G.S."/>
            <person name="Pettitt S.J."/>
            <person name="Smith G.C.M."/>
            <person name="Lord C.J."/>
        </authorList>
    </citation>
    <scope>FUNCTION</scope>
    <scope>ACTIVITY REGULATION</scope>
</reference>
<reference key="28">
    <citation type="journal article" date="2022" name="Mol. Cell">
        <title>POLQ seals post-replicative ssDNA gaps to maintain genome stability in BRCA-deficient cancer cells.</title>
        <authorList>
            <person name="Belan O."/>
            <person name="Sebald M."/>
            <person name="Adamowicz M."/>
            <person name="Anand R."/>
            <person name="Vancevska A."/>
            <person name="Neves J."/>
            <person name="Grinkevich V."/>
            <person name="Hewitt G."/>
            <person name="Segura-Bayona S."/>
            <person name="Bellelli R."/>
            <person name="Robinson H.M.R."/>
            <person name="Higgins G.S."/>
            <person name="Smith G.C.M."/>
            <person name="West S.C."/>
            <person name="Rueda D.S."/>
            <person name="Boulton S.J."/>
        </authorList>
    </citation>
    <scope>FUNCTION</scope>
    <scope>CATALYTIC ACTIVITY</scope>
</reference>
<reference key="29">
    <citation type="journal article" date="2023" name="Nature">
        <title>Poltheta is phosphorylated by PLK1 to repair double-strand breaks in mitosis.</title>
        <authorList>
            <person name="Gelot C."/>
            <person name="Kovacs M.T."/>
            <person name="Miron S."/>
            <person name="Mylne E."/>
            <person name="Haan A."/>
            <person name="Boeffard-Dosierre L."/>
            <person name="Ghouil R."/>
            <person name="Popova T."/>
            <person name="Dingli F."/>
            <person name="Loew D."/>
            <person name="Guirouilh-Barbat J."/>
            <person name="Del Nery E."/>
            <person name="Zinn-Justin S."/>
            <person name="Ceccaldi R."/>
        </authorList>
    </citation>
    <scope>FUNCTION</scope>
    <scope>SUBCELLULAR LOCATION</scope>
    <scope>INTERACTION WITH TOPBP1</scope>
    <scope>PHOSPHORYLATION AT SER-1289; SER-1482; SER-1486; SER-1488; SER-1493; SER-1555; SER-1563; SER-1628; SER-1635 AND THR-1755</scope>
    <scope>MUTAGENESIS OF 1482-SER--SER-1493</scope>
</reference>
<reference key="30">
    <citation type="journal article" date="2023" name="Science">
        <title>RHINO directs MMEJ to repair DNA breaks in mitosis.</title>
        <authorList>
            <person name="Brambati A."/>
            <person name="Sacco O."/>
            <person name="Porcella S."/>
            <person name="Heyza J."/>
            <person name="Kareh M."/>
            <person name="Schmidt J.C."/>
            <person name="Sfeir A."/>
        </authorList>
    </citation>
    <scope>FUNCTION</scope>
    <scope>SUBCELLULAR LOCATION</scope>
    <scope>INTERACTION WITH RHNO1</scope>
</reference>
<reference key="31">
    <citation type="journal article" date="2024" name="Mol. Cell">
        <title>Human DNA polymerase theta does not harbor intrinsic nuclease activity.</title>
        <authorList>
            <person name="Carvajal-Maldonado D."/>
            <person name="Zahn K."/>
            <person name="Jensen R."/>
            <person name="Wood R.D."/>
            <person name="Doublie S."/>
        </authorList>
    </citation>
    <scope>CAUTION</scope>
</reference>
<reference evidence="44 45" key="32">
    <citation type="journal article" date="2015" name="Nat. Struct. Mol. Biol.">
        <title>Human DNA polymerase theta grasps the primer terminus to mediate DNA repair.</title>
        <authorList>
            <person name="Zahn K.E."/>
            <person name="Averill A.M."/>
            <person name="Aller P."/>
            <person name="Wood R.D."/>
            <person name="Doublie S."/>
        </authorList>
    </citation>
    <scope>X-RAY CRYSTALLOGRAPHY (3.90 ANGSTROMS) OF 1819-2590 IN COMPLEX WITH CA(2+) AND MG(2+)</scope>
    <scope>FUNCTION</scope>
    <scope>CATALYTIC ACTIVITY</scope>
    <scope>COFACTOR</scope>
    <scope>MUTAGENESIS OF SER-1977; LYS-2181; ARG-2202 AND ARG-2254</scope>
</reference>
<reference evidence="46 47 48" key="33">
    <citation type="journal article" date="2015" name="Structure">
        <title>Structure of the helicase domain of DNA polymerase theta reveals a possible role in the microhomology-mediated end-joining pathway.</title>
        <authorList>
            <person name="Newman J.A."/>
            <person name="Cooper C.D.O."/>
            <person name="Aitkenhead H."/>
            <person name="Gileadi O."/>
        </authorList>
    </citation>
    <scope>X-RAY CRYSTALLOGRAPHY (2.90 ANGSTROMS) OF 67-894 IN COMPLEX WITH ADP</scope>
    <scope>FUNCTION</scope>
    <scope>SUBUNIT</scope>
</reference>
<reference evidence="49" key="34">
    <citation type="journal article" date="2021" name="Sci. Adv.">
        <title>Poltheta reverse transcribes RNA and promotes RNA-templated DNA repair.</title>
        <authorList>
            <person name="Chandramouly G."/>
            <person name="Zhao J."/>
            <person name="McDevitt S."/>
            <person name="Rusanov T."/>
            <person name="Hoang T."/>
            <person name="Borisonnik N."/>
            <person name="Treddinick T."/>
            <person name="Lopezcolorado F.W."/>
            <person name="Kent T."/>
            <person name="Siddique L.A."/>
            <person name="Mallon J."/>
            <person name="Huhn J."/>
            <person name="Shoda Z."/>
            <person name="Kashkina E."/>
            <person name="Brambati A."/>
            <person name="Stark J.M."/>
            <person name="Chen X.S."/>
            <person name="Pomerantz R.T."/>
        </authorList>
    </citation>
    <scope>X-RAY CRYSTALLOGRAPHY (3.29 ANGSTROMS) OF 1819-2590</scope>
    <scope>FUNCTION</scope>
    <scope>CATALYTIC ACTIVITY</scope>
</reference>
<protein>
    <recommendedName>
        <fullName evidence="34 35">DNA polymerase theta</fullName>
    </recommendedName>
    <alternativeName>
        <fullName evidence="36">DNA polymerase eta</fullName>
    </alternativeName>
    <domain>
        <recommendedName>
            <fullName evidence="37">Helicase POLQ</fullName>
            <ecNumber evidence="30">3.6.4.12</ecNumber>
        </recommendedName>
    </domain>
    <domain>
        <recommendedName>
            <fullName evidence="37">DNA polymerase POLQ</fullName>
            <ecNumber evidence="6 12 18 21">2.7.7.7</ecNumber>
        </recommendedName>
        <alternativeName>
            <fullName evidence="37">RNA-directed DNA polymerase POLQ</fullName>
            <ecNumber evidence="41">2.7.7.49</ecNumber>
        </alternativeName>
    </domain>
</protein>
<dbReference type="EC" id="3.6.4.12" evidence="30"/>
<dbReference type="EC" id="2.7.7.7" evidence="6 12 18 21"/>
<dbReference type="EC" id="2.7.7.49" evidence="41"/>
<dbReference type="EMBL" id="AF052573">
    <property type="protein sequence ID" value="AAC33565.1"/>
    <property type="molecule type" value="mRNA"/>
</dbReference>
<dbReference type="EMBL" id="AY338826">
    <property type="protein sequence ID" value="AAR08421.2"/>
    <property type="molecule type" value="mRNA"/>
</dbReference>
<dbReference type="EMBL" id="AC069239">
    <property type="status" value="NOT_ANNOTATED_CDS"/>
    <property type="molecule type" value="Genomic_DNA"/>
</dbReference>
<dbReference type="EMBL" id="AC079841">
    <property type="status" value="NOT_ANNOTATED_CDS"/>
    <property type="molecule type" value="Genomic_DNA"/>
</dbReference>
<dbReference type="EMBL" id="AF043628">
    <property type="protein sequence ID" value="AAD05272.1"/>
    <property type="status" value="ALT_FRAME"/>
    <property type="molecule type" value="mRNA"/>
</dbReference>
<dbReference type="CCDS" id="CCDS33833.1">
    <molecule id="O75417-1"/>
</dbReference>
<dbReference type="RefSeq" id="NP_955452.3">
    <molecule id="O75417-1"/>
    <property type="nucleotide sequence ID" value="NM_199420.4"/>
</dbReference>
<dbReference type="PDB" id="4X0P">
    <property type="method" value="X-ray"/>
    <property type="resolution" value="3.91 A"/>
    <property type="chains" value="A/B/C/D=1792-2590"/>
</dbReference>
<dbReference type="PDB" id="4X0Q">
    <property type="method" value="X-ray"/>
    <property type="resolution" value="3.90 A"/>
    <property type="chains" value="A/B=1819-2590"/>
</dbReference>
<dbReference type="PDB" id="5A9F">
    <property type="method" value="X-ray"/>
    <property type="resolution" value="3.20 A"/>
    <property type="chains" value="A=67-894"/>
</dbReference>
<dbReference type="PDB" id="5A9J">
    <property type="method" value="X-ray"/>
    <property type="resolution" value="3.55 A"/>
    <property type="chains" value="A/B/C/D=1-894"/>
</dbReference>
<dbReference type="PDB" id="5AGA">
    <property type="method" value="X-ray"/>
    <property type="resolution" value="2.90 A"/>
    <property type="chains" value="A=67-894"/>
</dbReference>
<dbReference type="PDB" id="6XBU">
    <property type="method" value="X-ray"/>
    <property type="resolution" value="3.29 A"/>
    <property type="chains" value="A=1819-1860, A=1896-1917, A=1935-2145, A=2176-2260, A=2265-2512, A=2527-2590"/>
</dbReference>
<dbReference type="PDB" id="7ZUS">
    <property type="method" value="X-ray"/>
    <property type="resolution" value="2.26 A"/>
    <property type="chains" value="AAA/BBB/CCC=1820-2590"/>
</dbReference>
<dbReference type="PDB" id="7ZX0">
    <property type="method" value="X-ray"/>
    <property type="resolution" value="2.99 A"/>
    <property type="chains" value="AAA/BBB/CCC/DDD/EEE/FFF=1820-2590"/>
</dbReference>
<dbReference type="PDB" id="7ZX1">
    <property type="method" value="X-ray"/>
    <property type="resolution" value="2.83 A"/>
    <property type="chains" value="AAA/BBB/CCC/DDD/EEE/FFF=1820-2590"/>
</dbReference>
<dbReference type="PDB" id="8E23">
    <property type="method" value="X-ray"/>
    <property type="resolution" value="2.59 A"/>
    <property type="chains" value="A/D=1818-2590"/>
</dbReference>
<dbReference type="PDB" id="8E24">
    <property type="method" value="X-ray"/>
    <property type="resolution" value="2.34 A"/>
    <property type="chains" value="A/D=1818-2590"/>
</dbReference>
<dbReference type="PDB" id="8GD7">
    <property type="method" value="X-ray"/>
    <property type="resolution" value="3.24 A"/>
    <property type="chains" value="A=1819-2590"/>
</dbReference>
<dbReference type="PDB" id="8W0A">
    <property type="method" value="EM"/>
    <property type="resolution" value="3.20 A"/>
    <property type="chains" value="A/C=1-894"/>
</dbReference>
<dbReference type="PDB" id="9ASJ">
    <property type="method" value="EM"/>
    <property type="resolution" value="3.50 A"/>
    <property type="chains" value="A/B=1-894"/>
</dbReference>
<dbReference type="PDB" id="9ASK">
    <property type="method" value="EM"/>
    <property type="resolution" value="3.60 A"/>
    <property type="chains" value="A/B=1-894"/>
</dbReference>
<dbReference type="PDB" id="9ASL">
    <property type="method" value="EM"/>
    <property type="resolution" value="3.50 A"/>
    <property type="chains" value="A/B/C/D=1-894"/>
</dbReference>
<dbReference type="PDB" id="9AU8">
    <property type="method" value="EM"/>
    <property type="resolution" value="3.44 A"/>
    <property type="chains" value="A=1792-2590"/>
</dbReference>
<dbReference type="PDB" id="9AU9">
    <property type="method" value="EM"/>
    <property type="resolution" value="3.32 A"/>
    <property type="chains" value="A=1792-2590"/>
</dbReference>
<dbReference type="PDB" id="9BH6">
    <property type="method" value="EM"/>
    <property type="resolution" value="3.30 A"/>
    <property type="chains" value="A/B/C/D=2-894"/>
</dbReference>
<dbReference type="PDB" id="9BH7">
    <property type="method" value="EM"/>
    <property type="resolution" value="3.50 A"/>
    <property type="chains" value="A/B=2-894"/>
</dbReference>
<dbReference type="PDB" id="9BH8">
    <property type="method" value="EM"/>
    <property type="resolution" value="3.60 A"/>
    <property type="chains" value="A/B=2-894"/>
</dbReference>
<dbReference type="PDB" id="9BH9">
    <property type="method" value="EM"/>
    <property type="resolution" value="3.50 A"/>
    <property type="chains" value="A/B=2-894"/>
</dbReference>
<dbReference type="PDB" id="9BHA">
    <property type="method" value="EM"/>
    <property type="resolution" value="3.50 A"/>
    <property type="chains" value="A/B=2-894"/>
</dbReference>
<dbReference type="PDB" id="9BP9">
    <property type="method" value="EM"/>
    <property type="resolution" value="3.21 A"/>
    <property type="chains" value="A/C=1-894"/>
</dbReference>
<dbReference type="PDB" id="9BPA">
    <property type="method" value="EM"/>
    <property type="resolution" value="3.21 A"/>
    <property type="chains" value="A/C/E/G=1-894"/>
</dbReference>
<dbReference type="PDB" id="9C5Q">
    <property type="method" value="EM"/>
    <property type="resolution" value="3.10 A"/>
    <property type="chains" value="A/C=68-891"/>
</dbReference>
<dbReference type="PDBsum" id="4X0P"/>
<dbReference type="PDBsum" id="4X0Q"/>
<dbReference type="PDBsum" id="5A9F"/>
<dbReference type="PDBsum" id="5A9J"/>
<dbReference type="PDBsum" id="5AGA"/>
<dbReference type="PDBsum" id="6XBU"/>
<dbReference type="PDBsum" id="7ZUS"/>
<dbReference type="PDBsum" id="7ZX0"/>
<dbReference type="PDBsum" id="7ZX1"/>
<dbReference type="PDBsum" id="8E23"/>
<dbReference type="PDBsum" id="8E24"/>
<dbReference type="PDBsum" id="8GD7"/>
<dbReference type="PDBsum" id="8W0A"/>
<dbReference type="PDBsum" id="9ASJ"/>
<dbReference type="PDBsum" id="9ASK"/>
<dbReference type="PDBsum" id="9ASL"/>
<dbReference type="PDBsum" id="9AU8"/>
<dbReference type="PDBsum" id="9AU9"/>
<dbReference type="PDBsum" id="9BH6"/>
<dbReference type="PDBsum" id="9BH7"/>
<dbReference type="PDBsum" id="9BH8"/>
<dbReference type="PDBsum" id="9BH9"/>
<dbReference type="PDBsum" id="9BHA"/>
<dbReference type="PDBsum" id="9BP9"/>
<dbReference type="PDBsum" id="9BPA"/>
<dbReference type="PDBsum" id="9C5Q"/>
<dbReference type="EMDB" id="EMD-43706"/>
<dbReference type="EMDB" id="EMD-43816"/>
<dbReference type="EMDB" id="EMD-43817"/>
<dbReference type="EMDB" id="EMD-43818"/>
<dbReference type="EMDB" id="EMD-43855"/>
<dbReference type="EMDB" id="EMD-43874"/>
<dbReference type="EMDB" id="EMD-43875"/>
<dbReference type="EMDB" id="EMD-44534"/>
<dbReference type="EMDB" id="EMD-44535"/>
<dbReference type="EMDB" id="EMD-44536"/>
<dbReference type="EMDB" id="EMD-44537"/>
<dbReference type="EMDB" id="EMD-44538"/>
<dbReference type="EMDB" id="EMD-44765"/>
<dbReference type="EMDB" id="EMD-44766"/>
<dbReference type="EMDB" id="EMD-45218"/>
<dbReference type="SMR" id="O75417"/>
<dbReference type="BioGRID" id="115946">
    <property type="interactions" value="19"/>
</dbReference>
<dbReference type="DIP" id="DIP-61500N"/>
<dbReference type="FunCoup" id="O75417">
    <property type="interactions" value="2403"/>
</dbReference>
<dbReference type="IntAct" id="O75417">
    <property type="interactions" value="9"/>
</dbReference>
<dbReference type="STRING" id="9606.ENSP00000264233"/>
<dbReference type="BindingDB" id="O75417"/>
<dbReference type="ChEMBL" id="CHEMBL6025"/>
<dbReference type="DrugBank" id="DB12151">
    <property type="generic name" value="Brincidofovir"/>
</dbReference>
<dbReference type="GuidetoPHARMACOLOGY" id="3230"/>
<dbReference type="GlyGen" id="O75417">
    <property type="glycosylation" value="3 sites, 1 O-linked glycan (2 sites)"/>
</dbReference>
<dbReference type="iPTMnet" id="O75417"/>
<dbReference type="PhosphoSitePlus" id="O75417"/>
<dbReference type="BioMuta" id="POLQ"/>
<dbReference type="CPTAC" id="CPTAC-5890"/>
<dbReference type="jPOST" id="O75417"/>
<dbReference type="MassIVE" id="O75417"/>
<dbReference type="PaxDb" id="9606-ENSP00000264233"/>
<dbReference type="PeptideAtlas" id="O75417"/>
<dbReference type="ProteomicsDB" id="49988">
    <molecule id="O75417-1"/>
</dbReference>
<dbReference type="ProteomicsDB" id="49989">
    <molecule id="O75417-2"/>
</dbReference>
<dbReference type="Pumba" id="O75417"/>
<dbReference type="Antibodypedia" id="32825">
    <property type="antibodies" value="75 antibodies from 23 providers"/>
</dbReference>
<dbReference type="DNASU" id="10721"/>
<dbReference type="Ensembl" id="ENST00000264233.6">
    <molecule id="O75417-1"/>
    <property type="protein sequence ID" value="ENSP00000264233.5"/>
    <property type="gene ID" value="ENSG00000051341.15"/>
</dbReference>
<dbReference type="GeneID" id="10721"/>
<dbReference type="KEGG" id="hsa:10721"/>
<dbReference type="MANE-Select" id="ENST00000264233.6">
    <property type="protein sequence ID" value="ENSP00000264233.5"/>
    <property type="RefSeq nucleotide sequence ID" value="NM_199420.4"/>
    <property type="RefSeq protein sequence ID" value="NP_955452.3"/>
</dbReference>
<dbReference type="UCSC" id="uc003eee.5">
    <molecule id="O75417-1"/>
    <property type="organism name" value="human"/>
</dbReference>
<dbReference type="AGR" id="HGNC:9186"/>
<dbReference type="CTD" id="10721"/>
<dbReference type="DisGeNET" id="10721"/>
<dbReference type="GeneCards" id="POLQ"/>
<dbReference type="HGNC" id="HGNC:9186">
    <property type="gene designation" value="POLQ"/>
</dbReference>
<dbReference type="HPA" id="ENSG00000051341">
    <property type="expression patterns" value="Tissue enhanced (bone marrow, lymphoid tissue)"/>
</dbReference>
<dbReference type="MalaCards" id="POLQ"/>
<dbReference type="MIM" id="114480">
    <property type="type" value="phenotype"/>
</dbReference>
<dbReference type="MIM" id="604419">
    <property type="type" value="gene"/>
</dbReference>
<dbReference type="neXtProt" id="NX_O75417"/>
<dbReference type="OpenTargets" id="ENSG00000051341"/>
<dbReference type="PharmGKB" id="PA33506"/>
<dbReference type="VEuPathDB" id="HostDB:ENSG00000051341"/>
<dbReference type="eggNOG" id="KOG0950">
    <property type="taxonomic scope" value="Eukaryota"/>
</dbReference>
<dbReference type="GeneTree" id="ENSGT00940000158694"/>
<dbReference type="HOGENOM" id="CLU_000818_0_1_1"/>
<dbReference type="InParanoid" id="O75417"/>
<dbReference type="OrthoDB" id="2320933at2759"/>
<dbReference type="PAN-GO" id="O75417">
    <property type="GO annotations" value="2 GO annotations based on evolutionary models"/>
</dbReference>
<dbReference type="PhylomeDB" id="O75417"/>
<dbReference type="TreeFam" id="TF105018"/>
<dbReference type="PathwayCommons" id="O75417"/>
<dbReference type="Reactome" id="R-HSA-5685939">
    <property type="pathway name" value="HDR through MMEJ (alt-NHEJ)"/>
</dbReference>
<dbReference type="SABIO-RK" id="O75417"/>
<dbReference type="SignaLink" id="O75417"/>
<dbReference type="SIGNOR" id="O75417"/>
<dbReference type="BioGRID-ORCS" id="10721">
    <property type="hits" value="114 hits in 1159 CRISPR screens"/>
</dbReference>
<dbReference type="ChiTaRS" id="POLQ">
    <property type="organism name" value="human"/>
</dbReference>
<dbReference type="EvolutionaryTrace" id="O75417"/>
<dbReference type="GeneWiki" id="POLQ"/>
<dbReference type="GenomeRNAi" id="10721"/>
<dbReference type="Pharos" id="O75417">
    <property type="development level" value="Tbio"/>
</dbReference>
<dbReference type="PRO" id="PR:O75417"/>
<dbReference type="Proteomes" id="UP000005640">
    <property type="component" value="Chromosome 3"/>
</dbReference>
<dbReference type="RNAct" id="O75417">
    <property type="molecule type" value="protein"/>
</dbReference>
<dbReference type="Bgee" id="ENSG00000051341">
    <property type="expression patterns" value="Expressed in secondary oocyte and 113 other cell types or tissues"/>
</dbReference>
<dbReference type="GO" id="GO:0005829">
    <property type="term" value="C:cytosol"/>
    <property type="evidence" value="ECO:0000314"/>
    <property type="project" value="HPA"/>
</dbReference>
<dbReference type="GO" id="GO:0005794">
    <property type="term" value="C:Golgi apparatus"/>
    <property type="evidence" value="ECO:0000314"/>
    <property type="project" value="HPA"/>
</dbReference>
<dbReference type="GO" id="GO:0042645">
    <property type="term" value="C:mitochondrial nucleoid"/>
    <property type="evidence" value="ECO:0000314"/>
    <property type="project" value="FlyBase"/>
</dbReference>
<dbReference type="GO" id="GO:0005654">
    <property type="term" value="C:nucleoplasm"/>
    <property type="evidence" value="ECO:0000314"/>
    <property type="project" value="HPA"/>
</dbReference>
<dbReference type="GO" id="GO:0005634">
    <property type="term" value="C:nucleus"/>
    <property type="evidence" value="ECO:0000314"/>
    <property type="project" value="FlyBase"/>
</dbReference>
<dbReference type="GO" id="GO:0090734">
    <property type="term" value="C:site of DNA damage"/>
    <property type="evidence" value="ECO:0000314"/>
    <property type="project" value="UniProtKB"/>
</dbReference>
<dbReference type="GO" id="GO:0035861">
    <property type="term" value="C:site of double-strand break"/>
    <property type="evidence" value="ECO:0000314"/>
    <property type="project" value="UniProtKB"/>
</dbReference>
<dbReference type="GO" id="GO:0051575">
    <property type="term" value="F:5'-deoxyribose-5-phosphate lyase activity"/>
    <property type="evidence" value="ECO:0000314"/>
    <property type="project" value="UniProtKB"/>
</dbReference>
<dbReference type="GO" id="GO:0005524">
    <property type="term" value="F:ATP binding"/>
    <property type="evidence" value="ECO:0007669"/>
    <property type="project" value="UniProtKB-KW"/>
</dbReference>
<dbReference type="GO" id="GO:0016887">
    <property type="term" value="F:ATP hydrolysis activity"/>
    <property type="evidence" value="ECO:0007669"/>
    <property type="project" value="RHEA"/>
</dbReference>
<dbReference type="GO" id="GO:0003682">
    <property type="term" value="F:chromatin binding"/>
    <property type="evidence" value="ECO:0000314"/>
    <property type="project" value="UniProtKB"/>
</dbReference>
<dbReference type="GO" id="GO:0003684">
    <property type="term" value="F:damaged DNA binding"/>
    <property type="evidence" value="ECO:0000304"/>
    <property type="project" value="ProtInc"/>
</dbReference>
<dbReference type="GO" id="GO:0003678">
    <property type="term" value="F:DNA helicase activity"/>
    <property type="evidence" value="ECO:0000314"/>
    <property type="project" value="UniProtKB"/>
</dbReference>
<dbReference type="GO" id="GO:0003887">
    <property type="term" value="F:DNA-directed DNA polymerase activity"/>
    <property type="evidence" value="ECO:0000314"/>
    <property type="project" value="UniProtKB"/>
</dbReference>
<dbReference type="GO" id="GO:0042802">
    <property type="term" value="F:identical protein binding"/>
    <property type="evidence" value="ECO:0000353"/>
    <property type="project" value="IntAct"/>
</dbReference>
<dbReference type="GO" id="GO:0000287">
    <property type="term" value="F:magnesium ion binding"/>
    <property type="evidence" value="ECO:0000314"/>
    <property type="project" value="UniProtKB"/>
</dbReference>
<dbReference type="GO" id="GO:0003964">
    <property type="term" value="F:RNA-directed DNA polymerase activity"/>
    <property type="evidence" value="ECO:0000304"/>
    <property type="project" value="UniProtKB"/>
</dbReference>
<dbReference type="GO" id="GO:0017116">
    <property type="term" value="F:single-stranded DNA helicase activity"/>
    <property type="evidence" value="ECO:0000314"/>
    <property type="project" value="UniProtKB"/>
</dbReference>
<dbReference type="GO" id="GO:0006284">
    <property type="term" value="P:base-excision repair"/>
    <property type="evidence" value="ECO:0000314"/>
    <property type="project" value="UniProtKB"/>
</dbReference>
<dbReference type="GO" id="GO:0006974">
    <property type="term" value="P:DNA damage response"/>
    <property type="evidence" value="ECO:0000314"/>
    <property type="project" value="UniProtKB"/>
</dbReference>
<dbReference type="GO" id="GO:0006281">
    <property type="term" value="P:DNA repair"/>
    <property type="evidence" value="ECO:0000304"/>
    <property type="project" value="ProtInc"/>
</dbReference>
<dbReference type="GO" id="GO:0006302">
    <property type="term" value="P:double-strand break repair"/>
    <property type="evidence" value="ECO:0000314"/>
    <property type="project" value="UniProtKB"/>
</dbReference>
<dbReference type="GO" id="GO:0097681">
    <property type="term" value="P:double-strand break repair via alternative nonhomologous end joining"/>
    <property type="evidence" value="ECO:0000314"/>
    <property type="project" value="UniProtKB"/>
</dbReference>
<dbReference type="GO" id="GO:0042276">
    <property type="term" value="P:error-prone translesion synthesis"/>
    <property type="evidence" value="ECO:0000314"/>
    <property type="project" value="UniProtKB"/>
</dbReference>
<dbReference type="GO" id="GO:2000042">
    <property type="term" value="P:negative regulation of double-strand break repair via homologous recombination"/>
    <property type="evidence" value="ECO:0000314"/>
    <property type="project" value="UniProtKB"/>
</dbReference>
<dbReference type="GO" id="GO:0051260">
    <property type="term" value="P:protein homooligomerization"/>
    <property type="evidence" value="ECO:0000314"/>
    <property type="project" value="UniProtKB"/>
</dbReference>
<dbReference type="GO" id="GO:0031297">
    <property type="term" value="P:replication fork processing"/>
    <property type="evidence" value="ECO:0000314"/>
    <property type="project" value="UniProtKB"/>
</dbReference>
<dbReference type="GO" id="GO:0016446">
    <property type="term" value="P:somatic hypermutation of immunoglobulin genes"/>
    <property type="evidence" value="ECO:0000250"/>
    <property type="project" value="UniProtKB"/>
</dbReference>
<dbReference type="CDD" id="cd18026">
    <property type="entry name" value="DEXHc_POLQ-like"/>
    <property type="match status" value="1"/>
</dbReference>
<dbReference type="CDD" id="cd08638">
    <property type="entry name" value="DNA_pol_A_theta"/>
    <property type="match status" value="1"/>
</dbReference>
<dbReference type="CDD" id="cd18795">
    <property type="entry name" value="SF2_C_Ski2"/>
    <property type="match status" value="1"/>
</dbReference>
<dbReference type="FunFam" id="1.10.3380.20:FF:000001">
    <property type="entry name" value="DNA polymerase theta"/>
    <property type="match status" value="1"/>
</dbReference>
<dbReference type="FunFam" id="3.30.420.10:FF:000066">
    <property type="entry name" value="DNA polymerase theta"/>
    <property type="match status" value="1"/>
</dbReference>
<dbReference type="FunFam" id="3.40.50.300:FF:000885">
    <property type="entry name" value="DNA polymerase theta"/>
    <property type="match status" value="1"/>
</dbReference>
<dbReference type="FunFam" id="1.10.150.20:FF:000036">
    <property type="entry name" value="Polymerase (DNA directed), theta"/>
    <property type="match status" value="1"/>
</dbReference>
<dbReference type="FunFam" id="1.20.1060.10:FF:000002">
    <property type="entry name" value="Polymerase (DNA directed), theta"/>
    <property type="match status" value="1"/>
</dbReference>
<dbReference type="FunFam" id="3.40.50.300:FF:000753">
    <property type="entry name" value="Polymerase (DNA directed), theta"/>
    <property type="match status" value="1"/>
</dbReference>
<dbReference type="Gene3D" id="1.10.3380.20">
    <property type="match status" value="1"/>
</dbReference>
<dbReference type="Gene3D" id="3.30.70.370">
    <property type="match status" value="1"/>
</dbReference>
<dbReference type="Gene3D" id="1.10.150.20">
    <property type="entry name" value="5' to 3' exonuclease, C-terminal subdomain"/>
    <property type="match status" value="1"/>
</dbReference>
<dbReference type="Gene3D" id="3.40.50.300">
    <property type="entry name" value="P-loop containing nucleotide triphosphate hydrolases"/>
    <property type="match status" value="2"/>
</dbReference>
<dbReference type="Gene3D" id="3.30.420.10">
    <property type="entry name" value="Ribonuclease H-like superfamily/Ribonuclease H"/>
    <property type="match status" value="1"/>
</dbReference>
<dbReference type="Gene3D" id="1.20.1060.10">
    <property type="entry name" value="Taq DNA Polymerase, Chain T, domain 4"/>
    <property type="match status" value="1"/>
</dbReference>
<dbReference type="InterPro" id="IPR011545">
    <property type="entry name" value="DEAD/DEAH_box_helicase_dom"/>
</dbReference>
<dbReference type="InterPro" id="IPR019760">
    <property type="entry name" value="DNA-dir_DNA_pol_A_CS"/>
</dbReference>
<dbReference type="InterPro" id="IPR001098">
    <property type="entry name" value="DNA-dir_DNA_pol_A_palm_dom"/>
</dbReference>
<dbReference type="InterPro" id="IPR043502">
    <property type="entry name" value="DNA/RNA_pol_sf"/>
</dbReference>
<dbReference type="InterPro" id="IPR002298">
    <property type="entry name" value="DNA_polymerase_A"/>
</dbReference>
<dbReference type="InterPro" id="IPR057220">
    <property type="entry name" value="DUF7898"/>
</dbReference>
<dbReference type="InterPro" id="IPR014001">
    <property type="entry name" value="Helicase_ATP-bd"/>
</dbReference>
<dbReference type="InterPro" id="IPR001650">
    <property type="entry name" value="Helicase_C-like"/>
</dbReference>
<dbReference type="InterPro" id="IPR046931">
    <property type="entry name" value="HTH_61"/>
</dbReference>
<dbReference type="InterPro" id="IPR027417">
    <property type="entry name" value="P-loop_NTPase"/>
</dbReference>
<dbReference type="InterPro" id="IPR048960">
    <property type="entry name" value="POLQ-like_helical"/>
</dbReference>
<dbReference type="InterPro" id="IPR012337">
    <property type="entry name" value="RNaseH-like_sf"/>
</dbReference>
<dbReference type="InterPro" id="IPR036397">
    <property type="entry name" value="RNaseH_sf"/>
</dbReference>
<dbReference type="PANTHER" id="PTHR10133">
    <property type="entry name" value="DNA POLYMERASE I"/>
    <property type="match status" value="1"/>
</dbReference>
<dbReference type="PANTHER" id="PTHR10133:SF62">
    <property type="entry name" value="DNA POLYMERASE THETA"/>
    <property type="match status" value="1"/>
</dbReference>
<dbReference type="Pfam" id="PF00270">
    <property type="entry name" value="DEAD"/>
    <property type="match status" value="1"/>
</dbReference>
<dbReference type="Pfam" id="PF00476">
    <property type="entry name" value="DNA_pol_A"/>
    <property type="match status" value="1"/>
</dbReference>
<dbReference type="Pfam" id="PF25453">
    <property type="entry name" value="DUF7898"/>
    <property type="match status" value="1"/>
</dbReference>
<dbReference type="Pfam" id="PF00271">
    <property type="entry name" value="Helicase_C"/>
    <property type="match status" value="1"/>
</dbReference>
<dbReference type="Pfam" id="PF20470">
    <property type="entry name" value="HTH_61"/>
    <property type="match status" value="1"/>
</dbReference>
<dbReference type="Pfam" id="PF21099">
    <property type="entry name" value="POLQ_helical"/>
    <property type="match status" value="1"/>
</dbReference>
<dbReference type="PRINTS" id="PR00868">
    <property type="entry name" value="DNAPOLI"/>
</dbReference>
<dbReference type="SMART" id="SM00487">
    <property type="entry name" value="DEXDc"/>
    <property type="match status" value="1"/>
</dbReference>
<dbReference type="SMART" id="SM00490">
    <property type="entry name" value="HELICc"/>
    <property type="match status" value="1"/>
</dbReference>
<dbReference type="SMART" id="SM00482">
    <property type="entry name" value="POLAc"/>
    <property type="match status" value="1"/>
</dbReference>
<dbReference type="SUPFAM" id="SSF56672">
    <property type="entry name" value="DNA/RNA polymerases"/>
    <property type="match status" value="1"/>
</dbReference>
<dbReference type="SUPFAM" id="SSF52540">
    <property type="entry name" value="P-loop containing nucleoside triphosphate hydrolases"/>
    <property type="match status" value="1"/>
</dbReference>
<dbReference type="SUPFAM" id="SSF53098">
    <property type="entry name" value="Ribonuclease H-like"/>
    <property type="match status" value="1"/>
</dbReference>
<dbReference type="SUPFAM" id="SSF158702">
    <property type="entry name" value="Sec63 N-terminal domain-like"/>
    <property type="match status" value="1"/>
</dbReference>
<dbReference type="PROSITE" id="PS00447">
    <property type="entry name" value="DNA_POLYMERASE_A"/>
    <property type="match status" value="1"/>
</dbReference>
<dbReference type="PROSITE" id="PS51192">
    <property type="entry name" value="HELICASE_ATP_BIND_1"/>
    <property type="match status" value="1"/>
</dbReference>
<dbReference type="PROSITE" id="PS51194">
    <property type="entry name" value="HELICASE_CTER"/>
    <property type="match status" value="1"/>
</dbReference>
<organism>
    <name type="scientific">Homo sapiens</name>
    <name type="common">Human</name>
    <dbReference type="NCBI Taxonomy" id="9606"/>
    <lineage>
        <taxon>Eukaryota</taxon>
        <taxon>Metazoa</taxon>
        <taxon>Chordata</taxon>
        <taxon>Craniata</taxon>
        <taxon>Vertebrata</taxon>
        <taxon>Euteleostomi</taxon>
        <taxon>Mammalia</taxon>
        <taxon>Eutheria</taxon>
        <taxon>Euarchontoglires</taxon>
        <taxon>Primates</taxon>
        <taxon>Haplorrhini</taxon>
        <taxon>Catarrhini</taxon>
        <taxon>Hominidae</taxon>
        <taxon>Homo</taxon>
    </lineage>
</organism>
<accession>O75417</accession>
<accession>O95160</accession>
<accession>Q6VMB5</accession>
<keyword id="KW-0002">3D-structure</keyword>
<keyword id="KW-0007">Acetylation</keyword>
<keyword id="KW-0025">Alternative splicing</keyword>
<keyword id="KW-0067">ATP-binding</keyword>
<keyword id="KW-0158">Chromosome</keyword>
<keyword id="KW-0227">DNA damage</keyword>
<keyword id="KW-0234">DNA repair</keyword>
<keyword id="KW-0239">DNA-directed DNA polymerase</keyword>
<keyword id="KW-0347">Helicase</keyword>
<keyword id="KW-0378">Hydrolase</keyword>
<keyword id="KW-0511">Multifunctional enzyme</keyword>
<keyword id="KW-0547">Nucleotide-binding</keyword>
<keyword id="KW-0548">Nucleotidyltransferase</keyword>
<keyword id="KW-0539">Nucleus</keyword>
<keyword id="KW-0597">Phosphoprotein</keyword>
<keyword id="KW-1267">Proteomics identification</keyword>
<keyword id="KW-1185">Reference proteome</keyword>
<keyword id="KW-0808">Transferase</keyword>
<comment type="function">
    <text evidence="2 6 7 8 11 12 13 16 17 18 19 20 21 22 23 24 25 26 27 28 29 30 31 32">Low-fidelity DNA polymerase with a helicase activity that promotes microhomology-mediated end-joining (MMEJ), an alternative non-homologous end-joining (NHEJ) machinery required to repair double-strand breaks in DNA during mitosis (PubMed:14576298, PubMed:18503084, PubMed:24648516, PubMed:25642963, PubMed:25643323, PubMed:25775267, PubMed:26636256, PubMed:27311885, PubMed:27591252, PubMed:30655289, PubMed:31562312, PubMed:32873648, PubMed:34140467, PubMed:34179826, PubMed:36455556, PubMed:37440612, PubMed:37674080). MMEJ is an error-prone repair pathway that produces deletions of sequences from the strand being repaired and promotes genomic rearrangements, such as telomere fusions, some of them leading to cellular transformation (PubMed:25642963, PubMed:25643323, PubMed:25775267, PubMed:27311885, PubMed:27591252, PubMed:31562312, PubMed:32873648). MMEJ is required during mitosis to repair persistent double-strand breaks that originate in S-phase (PubMed:37440612, PubMed:37674080). Although error-prone, MMEJ protects against chromosomal instability and tumorigenesis (By similarity). The polymerase acts by binding directly the 2 ends of resected double-strand breaks, allowing microhomologous sequences in the overhangs to form base pairs (PubMed:25643323, PubMed:25775267, PubMed:27311885, PubMed:27591252). It then extends each strand from the base-paired region using the opposing overhang as a template (PubMed:25643323, PubMed:25775267, PubMed:27311885, PubMed:27591252). Requires partially resected DNA containing 2 to 6 base pairs of microhomology to perform MMEJ (PubMed:25643323, PubMed:25775267, PubMed:27311885, PubMed:27591252). The polymerase lacks proofreading activity and is highly promiscuous: unlike most polymerases, promotes extension of ssDNA and partial ssDNA (pssDNA) substrates (PubMed:18503084, PubMed:21050863, PubMed:22135286). When the ends of a break do not contain terminal microhomology must identify embedded complementary sequences through a scanning step (PubMed:32234782). Also acts as a DNA helicase, promoting dissociation of the replication protein A complex (RPA/RP-A), composed of RPA1, RPA2 and RPA3, from resected double-strand breaks to allow their annealing and subsequent joining by MMEJ (PubMed:36455556). Removal of RPA/RP-A complex proteins prevents RAD51 accumulation at resected ends, thereby inhibiting homology-recombination repair (HR) pathway (PubMed:25642963, PubMed:28695890). Also shows RNA-directed DNA polymerase activity to mediate DNA repair in vitro; however this activity needs additional evidence in vivo (PubMed:34117057). May also have lyase activity (PubMed:19188258). Involved in somatic hypermutation of immunoglobulin genes, a process that requires the activity of DNA polymerases to ultimately introduce mutations at both A/T and C/G base pairs (By similarity). POLQ-mediated end joining activity is involved in random integration of exogenous DNA hampers (PubMed:28695890).</text>
</comment>
<comment type="catalytic activity">
    <reaction evidence="6 12 18 20 21">
        <text>DNA(n) + a 2'-deoxyribonucleoside 5'-triphosphate = DNA(n+1) + diphosphate</text>
        <dbReference type="Rhea" id="RHEA:22508"/>
        <dbReference type="Rhea" id="RHEA-COMP:17339"/>
        <dbReference type="Rhea" id="RHEA-COMP:17340"/>
        <dbReference type="ChEBI" id="CHEBI:33019"/>
        <dbReference type="ChEBI" id="CHEBI:61560"/>
        <dbReference type="ChEBI" id="CHEBI:173112"/>
        <dbReference type="EC" id="2.7.7.7"/>
    </reaction>
</comment>
<comment type="catalytic activity">
    <reaction evidence="30">
        <text>ATP + H2O = ADP + phosphate + H(+)</text>
        <dbReference type="Rhea" id="RHEA:13065"/>
        <dbReference type="ChEBI" id="CHEBI:15377"/>
        <dbReference type="ChEBI" id="CHEBI:15378"/>
        <dbReference type="ChEBI" id="CHEBI:30616"/>
        <dbReference type="ChEBI" id="CHEBI:43474"/>
        <dbReference type="ChEBI" id="CHEBI:456216"/>
        <dbReference type="EC" id="3.6.4.12"/>
    </reaction>
</comment>
<comment type="catalytic activity">
    <reaction evidence="41">
        <text>DNA(n) + a 2'-deoxyribonucleoside 5'-triphosphate = DNA(n+1) + diphosphate</text>
        <dbReference type="Rhea" id="RHEA:22508"/>
        <dbReference type="Rhea" id="RHEA-COMP:17339"/>
        <dbReference type="Rhea" id="RHEA-COMP:17340"/>
        <dbReference type="ChEBI" id="CHEBI:33019"/>
        <dbReference type="ChEBI" id="CHEBI:61560"/>
        <dbReference type="ChEBI" id="CHEBI:173112"/>
        <dbReference type="EC" id="2.7.7.49"/>
    </reaction>
</comment>
<comment type="cofactor">
    <cofactor evidence="18 20">
        <name>Mg(2+)</name>
        <dbReference type="ChEBI" id="CHEBI:18420"/>
    </cofactor>
</comment>
<comment type="activity regulation">
    <text evidence="28 29">Specifically inhibited by the antibiotic novobiocin (PubMed:34179826). The polymerase activity is specifically inhibited by the small molecule ART558 (PubMed:34140467). Novobiocin and ART558 confer specific killing of BRCA1/2-deficient cells and synergize with the poly [ADP-ribose] polymerase (PARP) inhibitor olaparib (PubMed:34140467, PubMed:34179826).</text>
</comment>
<comment type="biophysicochemical properties">
    <kinetics>
        <KM evidence="12">1.095 uM for dATP:T</KM>
        <KM evidence="12">0.622 uM for dATP: abasic site</KM>
        <KM evidence="12">3.08 uM for dGTP: no template</KM>
    </kinetics>
</comment>
<comment type="subunit">
    <text evidence="14 16 17 19 24 31 32">Homomultimer; forms homodimers and homotetramers (PubMed:25643323, PubMed:26636256, PubMed:31562312). Interacts with RAD51 (PubMed:25642963). Interacts with ORC2 and ORC4 (PubMed:24989122). Interacts with RHNO1; interaction takes place during mitosis and promotes POLQ recruitment to DNA damage sites (PubMed:37440612). Interacts (when phosphorylated) with TOPBP1 (via BRCT domains 7 and 8); promoting POLQ recruitment to DNA damage sites (PubMed:37674080).</text>
</comment>
<comment type="interaction">
    <interactant intactId="EBI-11062063">
        <id>O75417</id>
    </interactant>
    <interactant intactId="EBI-2211856">
        <id>P49756</id>
        <label>RBM25</label>
    </interactant>
    <organismsDiffer>false</organismsDiffer>
    <experiments>2</experiments>
</comment>
<comment type="interaction">
    <interactant intactId="EBI-16141065">
        <id>O75417-1</id>
    </interactant>
    <interactant intactId="EBI-16141065">
        <id>O75417-1</id>
        <label>POLQ</label>
    </interactant>
    <organismsDiffer>false</organismsDiffer>
    <experiments>5</experiments>
</comment>
<comment type="interaction">
    <interactant intactId="EBI-16141065">
        <id>O75417-1</id>
    </interactant>
    <interactant intactId="EBI-297202">
        <id>Q06609</id>
        <label>RAD51</label>
    </interactant>
    <organismsDiffer>false</organismsDiffer>
    <experiments>3</experiments>
</comment>
<comment type="subcellular location">
    <subcellularLocation>
        <location evidence="1">Nucleus</location>
    </subcellularLocation>
    <subcellularLocation>
        <location evidence="16 29 31 32">Chromosome</location>
    </subcellularLocation>
    <text evidence="14 16 29 31 32">Enriched in chromatin in response to ultaviolet (UV) light (PubMed:25642963, PubMed:34179826). Binds to chromatin during early G1 (PubMed:24989122). Recruited to DNA damage sites, such as double-stranded breaks (DSBs), following interaction with TOPBP1 and RHNO1 (PubMed:37440612, PubMed:37674080).</text>
</comment>
<comment type="alternative products">
    <event type="alternative splicing"/>
    <isoform>
        <id>O75417-1</id>
        <name>1</name>
        <sequence type="displayed"/>
    </isoform>
    <isoform>
        <id>O75417-2</id>
        <name>2</name>
        <sequence type="described" ref="VSP_040747 VSP_040748"/>
    </isoform>
</comment>
<comment type="tissue specificity">
    <text evidence="6">Highly expressed in testis.</text>
</comment>
<comment type="domain">
    <text evidence="17">The loop 2 region is involved in the binding of the 2 ends of resected double-strand breaks and homomultimerization.</text>
</comment>
<comment type="PTM">
    <text evidence="32">Phosphorylated by PLK1; promoting interaction with TOPBP1 and recruitment to DNA damage sites.</text>
</comment>
<comment type="disease" evidence="9 10 15">
    <disease id="DI-02602">
        <name>Breast cancer</name>
        <acronym>BC</acronym>
        <description>A common malignancy originating from breast epithelial tissue. Breast neoplasms can be distinguished by their histologic pattern. Invasive ductal carcinoma is by far the most common type. Breast cancer is etiologically and genetically heterogeneous. Important genetic factors have been indicated by familial occurrence and bilateral involvement. Mutations at more than one locus can be involved in different families or even in the same case.</description>
        <dbReference type="MIM" id="114480"/>
    </disease>
    <text>The gene represented in this entry may be involved in disease pathogenesis.</text>
</comment>
<comment type="similarity">
    <text evidence="37">Belongs to the DNA polymerase type-A family.</text>
</comment>
<comment type="caution">
    <text evidence="33 40 42">A publication reported some endonuclease activity required to trim the 3' ends before synthesis can occur. However, subsequent research from the same group showed that DNA synthesis products generated by POLQ that migrate more quickly on denaturing polyacrylamide gels arise by production of stable stem-loop structures rather than from nuclease activity (PubMed:38640889). The original publication was therefore retracted.</text>
</comment>
<comment type="caution">
    <text evidence="37">Was wrongly named DNA polymerase eta (POLH) somne authors (Ref.4). This protein corresponds to DNA polymerase theta (POLQ) and should not be confused with DNA polymerase eta (POLH) (AC Q9Y253).</text>
</comment>
<comment type="sequence caution" evidence="37">
    <conflict type="frameshift">
        <sequence resource="EMBL-CDS" id="AAD05272"/>
    </conflict>
</comment>
<sequence>MNLLRRSGKRRRSESGSDSFSGSGGDSSASPQFLSGSVLSPPPGLGRCLKAAAAGECKPTVPDYERDKLLLANWGLPKAVLEKYHSFGVKKMFEWQAECLLLGQVLEGKNLVYSAPTSAGKTLVAELLILKRVLEMRKKALFILPFVSVAKEKKYYLQSLFQEVGIKVDGYMGSTSPSRHFSSLDIAVCTIERANGLINRLIEENKMDLLGMVVVDELHMLGDSHRGYLLELLLTKICYITRKSASCQADLASSLSNAVQIVGMSATLPNLELVASWLNAELYHTDFRPVPLLESVKVGNSIYDSSMKLVREFEPMLQVKGDEDHVVSLCYETICDNHSVLLFCPSKKWCEKLADIIAREFYNLHHQAEGLVKPSECPPVILEQKELLEVMDQLRRLPSGLDSVLQKTVPWGVAFHHAGLTFEERDIIEGAFRQGLIRVLAATSTLSSGVNLPARRVIIRTPIFGGRPLDILTYKQMVGRAGRKGVDTVGESILICKNSEKSKGIALLQGSLKPVRSCLQRREGEEVTGSMIRAILEIIVGGVASTSQDMHTYAACTFLAASMKEGKQGIQRNQESVQLGAIEACVMWLLENEFIQSTEASDGTEGKVYHPTHLGSATLSSSLSPADTLDIFADLQRAMKGFVLENDLHILYLVTPMFEDWTTIDWYRFFCLWEKLPTSMKRVAELVGVEEGFLARCVKGKVVARTERQHRQMAIHKRFFTSLVLLDLISEVPLREINQKYGCNRGQIQSLQQSAAVYAGMITVFSNRLGWHNMELLLSQFQKRLTFGIQRELCDLVRVSLLNAQRARVLYASGFHTVADLARANIVEVEVILKNAVPFKSARKAVDEEEEAVEERRNMRTIWVTGRKGLTEREAAALIVEEARMILQQDLVEMGVQWNPCALLHSSTCSLTHSESEVKEHTFISQTKSSYKKLTSKNKSNTIFSDSYIKHSPNIVQDLNKSREHTSSFNCNFQNGNQEHQTCSIFRARKRASLDINKEKPGASQNEGKTSDKKVVQTFSQKTKKAPLNFNSEKMSRSFRSWKRRKHLKRSRDSSPLKDSGACRIHLQGQTLSNPSLCEDPFTLDEKKTEFRNSGPFAKNVSLSGKEKDNKTSFPLQIKQNCSWNITLTNDNFVEHIVTGSQSKNVTCQATSVVSEKGRGVAVEAEKINEVLIQNGSKNQNVYMKHHDIHPINQYLRKQSHEQTSTITKQKNIIERQMPCEAVSSYINRDSNVTINCERIKLNTEENKPSHFQALGDDISRTVIPSEVLPSAGAFSKSEGQHENFLNISRLQEKTGTYTTNKTKNNHVSDLGLVLCDFEDSFYLDTQSEKIIQQMATENAKLGAKDTNLAAGIMQKSLVQQNSMNSFQKECHIPFPAEQHPLGATKIDHLDLKTVGTMKQSSDSHGVDILTPESPIFHSPILLEENGLFLKKNEVSVTDSQLNSFLQGYQTQETVKPVILLIPQKRTPTGVEGECLPVPETSLNMSDSLLFDSFSDDYLVKEQLPDMQMKEPLPSEVTSNHFSDSLCLQEDLIKKSNVNENQDTHQQLTCSNDESIIFSEMDSVQMVEALDNVDIFPVQEKNHTVVSPRALELSDPVLDEHHQGDQDGGDQDERAEKSKLTGTRQNHSFIWSGASFDLSPGLQRILDKVSSPLENEKLKSMTINFSSLNRKNTELNEEQEVISNLETKQVQGISFSSNNEVKSKIEMLENNANHDETSSLLPRKESNIVDDNGLIPPTPIPTSASKLTFPGILETPVNPWKTNNVLQPGESYLFGSPSDIKNHDLSPGSRNGFKDNSPISDTSFSLQLSQDGLQLTPASSSSESLSIIDVASDQNLFQTFIKEWRCKKRFSISLACEKIRSLTSSKTATIGSRFKQASSPQEIPIRDDGFPIKGCDDTLVVGLAVCWGGRDAYYFSLQKEQKHSEISASLVPPSLDPSLTLKDRMWYLQSCLRKESDKECSVVIYDFIQSYKILLLSCGISLEQSYEDPKVACWLLDPDSQEPTLHSIVTSFLPHELPLLEGMETSQGIQSLGLNAGSEHSGRYRASVESILIFNSMNQLNSLLQKENLQDVFRKVEMPSQYCLALLELNGIGFSTAECESQKHIMQAKLDAIETQAYQLAGHSFSFTSSDDIAEVLFLELKLPPNREMKNQGSKKTLGSTRRGIDNGRKLRLGRQFSTSKDVLNKLKALHPLPGLILEWRRITNAITKVVFPLQREKCLNPFLGMERIYPVSQSHTATGRITFTEPNIQNVPRDFEIKMPTLVGESPPSQAVGKGLLPMGRGKYKKGFSVNPRCQAQMEERAADRGMPFSISMRHAFVPFPGGSILAADYSQLELRILAHLSHDRRLIQVLNTGADVFRSIAAEWKMIEPESVGDDLRQQAKQICYGIIYGMGAKSLGEQMGIKENDAACYIDSFKSRYTGINQFMTETVKNCKRDGFVQTILGRRRYLPGIKDNNPYRKAHAERQAINTIVQGSAADIVKIATVNIQKQLETFHSTFKSHGHREGMLQSDQTGLSRKRKLQGMFCPIRGGFFILQLHDELLYEVAEEDVVQVAQIVKNEMESAVKLSVKLKVKVKIGASWGELKDFDV</sequence>
<gene>
    <name evidence="34 35 43" type="primary">POLQ</name>
    <name evidence="36" type="synonym">POLH</name>
</gene>
<proteinExistence type="evidence at protein level"/>
<feature type="chain" id="PRO_0000101279" description="DNA polymerase theta">
    <location>
        <begin position="1"/>
        <end position="2590"/>
    </location>
</feature>
<feature type="domain" description="Helicase ATP-binding" evidence="3">
    <location>
        <begin position="102"/>
        <end position="286"/>
    </location>
</feature>
<feature type="domain" description="Helicase C-terminal" evidence="4">
    <location>
        <begin position="321"/>
        <end position="554"/>
    </location>
</feature>
<feature type="region of interest" description="Disordered" evidence="5">
    <location>
        <begin position="1"/>
        <end position="33"/>
    </location>
</feature>
<feature type="region of interest" description="Helicase activity" evidence="37">
    <location>
        <begin position="102"/>
        <end position="554"/>
    </location>
</feature>
<feature type="region of interest" description="Interaction with RAD51" evidence="16">
    <location>
        <begin position="847"/>
        <end position="894"/>
    </location>
</feature>
<feature type="region of interest" description="Disordered" evidence="5">
    <location>
        <begin position="1034"/>
        <end position="1060"/>
    </location>
</feature>
<feature type="region of interest" description="Disordered" evidence="5">
    <location>
        <begin position="1594"/>
        <end position="1622"/>
    </location>
</feature>
<feature type="region of interest" description="Disordered" evidence="5">
    <location>
        <begin position="1777"/>
        <end position="1797"/>
    </location>
</feature>
<feature type="region of interest" description="DNA polymerase activity" evidence="37">
    <location>
        <begin position="2097"/>
        <end position="2584"/>
    </location>
</feature>
<feature type="region of interest" description="Loop 1" evidence="11">
    <location>
        <begin position="2142"/>
        <end position="2177"/>
    </location>
</feature>
<feature type="region of interest" description="Loop 2" evidence="11 17">
    <location>
        <begin position="2257"/>
        <end position="2322"/>
    </location>
</feature>
<feature type="region of interest" description="Loop 3" evidence="11">
    <location>
        <begin position="2491"/>
        <end position="2535"/>
    </location>
</feature>
<feature type="short sequence motif" description="DEAH box">
    <location>
        <begin position="216"/>
        <end position="219"/>
    </location>
</feature>
<feature type="compositionally biased region" description="Basic residues" evidence="5">
    <location>
        <begin position="1"/>
        <end position="12"/>
    </location>
</feature>
<feature type="compositionally biased region" description="Low complexity" evidence="5">
    <location>
        <begin position="16"/>
        <end position="30"/>
    </location>
</feature>
<feature type="compositionally biased region" description="Basic residues" evidence="5">
    <location>
        <begin position="1040"/>
        <end position="1050"/>
    </location>
</feature>
<feature type="compositionally biased region" description="Basic and acidic residues" evidence="5">
    <location>
        <begin position="1598"/>
        <end position="1619"/>
    </location>
</feature>
<feature type="binding site" evidence="39 46 48">
    <location>
        <position position="96"/>
    </location>
    <ligand>
        <name>ATP</name>
        <dbReference type="ChEBI" id="CHEBI:30616"/>
    </ligand>
</feature>
<feature type="binding site" evidence="3 39 46 48">
    <location>
        <begin position="115"/>
        <end position="122"/>
    </location>
    <ligand>
        <name>ATP</name>
        <dbReference type="ChEBI" id="CHEBI:30616"/>
    </ligand>
</feature>
<feature type="binding site" evidence="18 45">
    <location>
        <position position="2330"/>
    </location>
    <ligand>
        <name>Mg(2+)</name>
        <dbReference type="ChEBI" id="CHEBI:18420"/>
    </ligand>
</feature>
<feature type="binding site" evidence="18 45">
    <location>
        <position position="2331"/>
    </location>
    <ligand>
        <name>Mg(2+)</name>
        <dbReference type="ChEBI" id="CHEBI:18420"/>
    </ligand>
</feature>
<feature type="binding site" evidence="18 45">
    <location>
        <position position="2540"/>
    </location>
    <ligand>
        <name>Mg(2+)</name>
        <dbReference type="ChEBI" id="CHEBI:18420"/>
    </ligand>
</feature>
<feature type="modified residue" description="N6-acetyllysine" evidence="50">
    <location>
        <position position="990"/>
    </location>
</feature>
<feature type="modified residue" description="Phosphoserine; by PLK1" evidence="32">
    <location>
        <position position="1289"/>
    </location>
</feature>
<feature type="modified residue" description="Phosphoserine; by PLK1" evidence="32">
    <location>
        <position position="1482"/>
    </location>
</feature>
<feature type="modified residue" description="Phosphoserine; by PLK1" evidence="32">
    <location>
        <position position="1486"/>
    </location>
</feature>
<feature type="modified residue" description="Phosphoserine; by PLK1" evidence="32">
    <location>
        <position position="1488"/>
    </location>
</feature>
<feature type="modified residue" description="Phosphoserine; by PLK1" evidence="32">
    <location>
        <position position="1493"/>
    </location>
</feature>
<feature type="modified residue" description="Phosphoserine; by PLK1" evidence="32">
    <location>
        <position position="1555"/>
    </location>
</feature>
<feature type="modified residue" description="Phosphoserine; by PLK1" evidence="32">
    <location>
        <position position="1563"/>
    </location>
</feature>
<feature type="modified residue" description="Phosphoserine; by PLK1" evidence="32">
    <location>
        <position position="1628"/>
    </location>
</feature>
<feature type="modified residue" description="Phosphoserine; by PLK1" evidence="32">
    <location>
        <position position="1635"/>
    </location>
</feature>
<feature type="modified residue" description="Phosphothreonine; by PLK1" evidence="32">
    <location>
        <position position="1755"/>
    </location>
</feature>
<feature type="splice variant" id="VSP_040747" description="In isoform 2." evidence="34">
    <location>
        <begin position="1"/>
        <end position="828"/>
    </location>
</feature>
<feature type="splice variant" id="VSP_040748" description="In isoform 2." evidence="34">
    <original>VEVILKNAVPFK</original>
    <variation>MNSFLSFPISLC</variation>
    <location>
        <begin position="829"/>
        <end position="840"/>
    </location>
</feature>
<feature type="sequence variant" id="VAR_055707" description="In dbSNP:rs34778629.">
    <original>P</original>
    <variation>L</variation>
    <location>
        <position position="1056"/>
    </location>
</feature>
<feature type="mutagenesis site" description="Abolished ATPase activity." evidence="24">
    <original>K</original>
    <variation>M</variation>
    <location>
        <position position="121"/>
    </location>
</feature>
<feature type="mutagenesis site" description="In 4S-P mutant; decreased phosphorylation by PLK1, leading to impaired interaction with TOPBP1 and recruitment to DNA damage sites." evidence="32">
    <original>SLNMSDSLLFDS</original>
    <variation>ALNMADALLFDA</variation>
    <location>
        <begin position="1482"/>
        <end position="1493"/>
    </location>
</feature>
<feature type="mutagenesis site" description="Decreased protein stability." evidence="38">
    <original>S</original>
    <variation>P</variation>
    <location>
        <position position="1977"/>
    </location>
</feature>
<feature type="mutagenesis site" description="Impaired ability to bypasse abasic sites." evidence="18">
    <original>K</original>
    <variation>A</variation>
    <location>
        <position position="2181"/>
    </location>
</feature>
<feature type="mutagenesis site" description="Impaired ability to bypasse abasic sites. In Pol-theta(RR) mutant; abolished polymerase activity; when associated with V-2254." evidence="18 20">
    <original>R</original>
    <variation>A</variation>
    <location>
        <position position="2202"/>
    </location>
</feature>
<feature type="mutagenesis site" description="Impaired ability to bypasse abasic sites." evidence="18">
    <original>R</original>
    <variation>A</variation>
    <variation>V</variation>
    <location>
        <position position="2254"/>
    </location>
</feature>
<feature type="mutagenesis site" description="In Pol-theta(RR) mutant; abolished polymerase activity; when associated with A-2202." evidence="20">
    <original>R</original>
    <variation>V</variation>
    <location>
        <position position="2254"/>
    </location>
</feature>
<feature type="mutagenesis site" description="Abolishes DNA polymerase activity." evidence="8 13">
    <original>DE</original>
    <variation>AA</variation>
    <location>
        <begin position="2540"/>
        <end position="2541"/>
    </location>
</feature>
<feature type="sequence conflict" description="In Ref. 2; AAR08421." evidence="37" ref="2">
    <original>R</original>
    <variation>I</variation>
    <location>
        <position position="66"/>
    </location>
</feature>
<feature type="sequence conflict" description="In Ref. 2; AAR08421." evidence="37" ref="2">
    <original>T</original>
    <variation>R</variation>
    <location>
        <position position="982"/>
    </location>
</feature>
<feature type="sequence conflict" description="In Ref. 4; AAD05272." evidence="37" ref="4">
    <original>L</original>
    <variation>F</variation>
    <location>
        <position position="2013"/>
    </location>
</feature>
<feature type="sequence conflict" description="In Ref. 1; AAC33565 and 2; AAR08421." evidence="37" ref="1 2">
    <original>Q</original>
    <variation>R</variation>
    <location>
        <position position="2513"/>
    </location>
</feature>
<feature type="sequence conflict" description="In Ref. 1; AAC33565." evidence="37" ref="1">
    <original>A</original>
    <variation>V</variation>
    <location>
        <position position="2547"/>
    </location>
</feature>
<feature type="helix" evidence="51">
    <location>
        <begin position="71"/>
        <end position="73"/>
    </location>
</feature>
<feature type="helix" evidence="51">
    <location>
        <begin position="78"/>
        <end position="85"/>
    </location>
</feature>
<feature type="helix" evidence="51">
    <location>
        <begin position="94"/>
        <end position="101"/>
    </location>
</feature>
<feature type="strand" evidence="51">
    <location>
        <begin position="102"/>
        <end position="104"/>
    </location>
</feature>
<feature type="turn" evidence="51">
    <location>
        <begin position="105"/>
        <end position="108"/>
    </location>
</feature>
<feature type="strand" evidence="51">
    <location>
        <begin position="111"/>
        <end position="114"/>
    </location>
</feature>
<feature type="strand" evidence="55">
    <location>
        <begin position="117"/>
        <end position="119"/>
    </location>
</feature>
<feature type="helix" evidence="51">
    <location>
        <begin position="121"/>
        <end position="135"/>
    </location>
</feature>
<feature type="strand" evidence="51">
    <location>
        <begin position="139"/>
        <end position="146"/>
    </location>
</feature>
<feature type="helix" evidence="51">
    <location>
        <begin position="147"/>
        <end position="161"/>
    </location>
</feature>
<feature type="helix" evidence="51">
    <location>
        <begin position="162"/>
        <end position="164"/>
    </location>
</feature>
<feature type="strand" evidence="51">
    <location>
        <begin position="168"/>
        <end position="171"/>
    </location>
</feature>
<feature type="helix" evidence="51">
    <location>
        <begin position="181"/>
        <end position="183"/>
    </location>
</feature>
<feature type="strand" evidence="51">
    <location>
        <begin position="185"/>
        <end position="190"/>
    </location>
</feature>
<feature type="helix" evidence="51">
    <location>
        <begin position="191"/>
        <end position="203"/>
    </location>
</feature>
<feature type="helix" evidence="51">
    <location>
        <begin position="207"/>
        <end position="209"/>
    </location>
</feature>
<feature type="strand" evidence="51">
    <location>
        <begin position="210"/>
        <end position="216"/>
    </location>
</feature>
<feature type="helix" evidence="51">
    <location>
        <begin position="218"/>
        <end position="221"/>
    </location>
</feature>
<feature type="helix" evidence="51">
    <location>
        <begin position="229"/>
        <end position="243"/>
    </location>
</feature>
<feature type="helix" evidence="51">
    <location>
        <begin position="245"/>
        <end position="247"/>
    </location>
</feature>
<feature type="strand" evidence="51">
    <location>
        <begin position="260"/>
        <end position="266"/>
    </location>
</feature>
<feature type="helix" evidence="51">
    <location>
        <begin position="271"/>
        <end position="277"/>
    </location>
</feature>
<feature type="strand" evidence="51">
    <location>
        <begin position="281"/>
        <end position="284"/>
    </location>
</feature>
<feature type="strand" evidence="51">
    <location>
        <begin position="292"/>
        <end position="298"/>
    </location>
</feature>
<feature type="strand" evidence="51">
    <location>
        <begin position="301"/>
        <end position="303"/>
    </location>
</feature>
<feature type="turn" evidence="55">
    <location>
        <begin position="305"/>
        <end position="307"/>
    </location>
</feature>
<feature type="strand" evidence="51">
    <location>
        <begin position="309"/>
        <end position="312"/>
    </location>
</feature>
<feature type="helix" evidence="51">
    <location>
        <begin position="326"/>
        <end position="335"/>
    </location>
</feature>
<feature type="strand" evidence="51">
    <location>
        <begin position="340"/>
        <end position="343"/>
    </location>
</feature>
<feature type="helix" evidence="51">
    <location>
        <begin position="347"/>
        <end position="366"/>
    </location>
</feature>
<feature type="strand" evidence="51">
    <location>
        <begin position="380"/>
        <end position="383"/>
    </location>
</feature>
<feature type="helix" evidence="51">
    <location>
        <begin position="384"/>
        <end position="395"/>
    </location>
</feature>
<feature type="helix" evidence="51">
    <location>
        <begin position="403"/>
        <end position="408"/>
    </location>
</feature>
<feature type="helix" evidence="51">
    <location>
        <begin position="409"/>
        <end position="411"/>
    </location>
</feature>
<feature type="strand" evidence="51">
    <location>
        <begin position="413"/>
        <end position="416"/>
    </location>
</feature>
<feature type="strand" evidence="55">
    <location>
        <begin position="418"/>
        <end position="420"/>
    </location>
</feature>
<feature type="helix" evidence="51">
    <location>
        <begin position="422"/>
        <end position="433"/>
    </location>
</feature>
<feature type="strand" evidence="55">
    <location>
        <begin position="434"/>
        <end position="436"/>
    </location>
</feature>
<feature type="strand" evidence="51">
    <location>
        <begin position="439"/>
        <end position="442"/>
    </location>
</feature>
<feature type="helix" evidence="51">
    <location>
        <begin position="444"/>
        <end position="447"/>
    </location>
</feature>
<feature type="strand" evidence="51">
    <location>
        <begin position="454"/>
        <end position="460"/>
    </location>
</feature>
<feature type="strand" evidence="51">
    <location>
        <begin position="462"/>
        <end position="464"/>
    </location>
</feature>
<feature type="helix" evidence="51">
    <location>
        <begin position="471"/>
        <end position="478"/>
    </location>
</feature>
<feature type="turn" evidence="51">
    <location>
        <begin position="484"/>
        <end position="486"/>
    </location>
</feature>
<feature type="strand" evidence="51">
    <location>
        <begin position="490"/>
        <end position="496"/>
    </location>
</feature>
<feature type="turn" evidence="55">
    <location>
        <begin position="498"/>
        <end position="500"/>
    </location>
</feature>
<feature type="helix" evidence="51">
    <location>
        <begin position="501"/>
        <end position="509"/>
    </location>
</feature>
<feature type="strand" evidence="55">
    <location>
        <begin position="523"/>
        <end position="526"/>
    </location>
</feature>
<feature type="helix" evidence="51">
    <location>
        <begin position="529"/>
        <end position="540"/>
    </location>
</feature>
<feature type="helix" evidence="51">
    <location>
        <begin position="547"/>
        <end position="556"/>
    </location>
</feature>
<feature type="turn" evidence="51">
    <location>
        <begin position="559"/>
        <end position="562"/>
    </location>
</feature>
<feature type="helix" evidence="51">
    <location>
        <begin position="581"/>
        <end position="591"/>
    </location>
</feature>
<feature type="strand" evidence="51">
    <location>
        <begin position="594"/>
        <end position="598"/>
    </location>
</feature>
<feature type="strand" evidence="51">
    <location>
        <begin position="607"/>
        <end position="611"/>
    </location>
</feature>
<feature type="helix" evidence="51">
    <location>
        <begin position="613"/>
        <end position="620"/>
    </location>
</feature>
<feature type="helix" evidence="51">
    <location>
        <begin position="625"/>
        <end position="638"/>
    </location>
</feature>
<feature type="strand" evidence="51">
    <location>
        <begin position="645"/>
        <end position="647"/>
    </location>
</feature>
<feature type="helix" evidence="51">
    <location>
        <begin position="648"/>
        <end position="653"/>
    </location>
</feature>
<feature type="strand" evidence="55">
    <location>
        <begin position="659"/>
        <end position="662"/>
    </location>
</feature>
<feature type="helix" evidence="51">
    <location>
        <begin position="666"/>
        <end position="674"/>
    </location>
</feature>
<feature type="helix" evidence="51">
    <location>
        <begin position="678"/>
        <end position="687"/>
    </location>
</feature>
<feature type="helix" evidence="51">
    <location>
        <begin position="691"/>
        <end position="698"/>
    </location>
</feature>
<feature type="turn" evidence="51">
    <location>
        <begin position="708"/>
        <end position="711"/>
    </location>
</feature>
<feature type="helix" evidence="51">
    <location>
        <begin position="712"/>
        <end position="728"/>
    </location>
</feature>
<feature type="turn" evidence="51">
    <location>
        <begin position="729"/>
        <end position="731"/>
    </location>
</feature>
<feature type="helix" evidence="51">
    <location>
        <begin position="734"/>
        <end position="741"/>
    </location>
</feature>
<feature type="helix" evidence="51">
    <location>
        <begin position="745"/>
        <end position="768"/>
    </location>
</feature>
<feature type="helix" evidence="51">
    <location>
        <begin position="772"/>
        <end position="778"/>
    </location>
</feature>
<feature type="helix" evidence="51">
    <location>
        <begin position="781"/>
        <end position="787"/>
    </location>
</feature>
<feature type="helix" evidence="51">
    <location>
        <begin position="791"/>
        <end position="794"/>
    </location>
</feature>
<feature type="helix" evidence="51">
    <location>
        <begin position="796"/>
        <end position="798"/>
    </location>
</feature>
<feature type="helix" evidence="51">
    <location>
        <begin position="804"/>
        <end position="811"/>
    </location>
</feature>
<feature type="turn" evidence="51">
    <location>
        <begin position="812"/>
        <end position="814"/>
    </location>
</feature>
<feature type="helix" evidence="51">
    <location>
        <begin position="818"/>
        <end position="822"/>
    </location>
</feature>
<feature type="helix" evidence="51">
    <location>
        <begin position="826"/>
        <end position="834"/>
    </location>
</feature>
<feature type="strand" evidence="55">
    <location>
        <begin position="835"/>
        <end position="837"/>
    </location>
</feature>
<feature type="strand" evidence="51">
    <location>
        <begin position="840"/>
        <end position="842"/>
    </location>
</feature>
<feature type="helix" evidence="55">
    <location>
        <begin position="850"/>
        <end position="857"/>
    </location>
</feature>
<feature type="strand" evidence="55">
    <location>
        <begin position="858"/>
        <end position="861"/>
    </location>
</feature>
<feature type="helix" evidence="51">
    <location>
        <begin position="872"/>
        <end position="889"/>
    </location>
</feature>
<feature type="strand" evidence="54">
    <location>
        <begin position="1826"/>
        <end position="1829"/>
    </location>
</feature>
<feature type="helix" evidence="54">
    <location>
        <begin position="1830"/>
        <end position="1832"/>
    </location>
</feature>
<feature type="helix" evidence="54">
    <location>
        <begin position="1834"/>
        <end position="1844"/>
    </location>
</feature>
<feature type="strand" evidence="54">
    <location>
        <begin position="1848"/>
        <end position="1858"/>
    </location>
</feature>
<feature type="turn" evidence="54">
    <location>
        <begin position="1862"/>
        <end position="1864"/>
    </location>
</feature>
<feature type="strand" evidence="54">
    <location>
        <begin position="1896"/>
        <end position="1908"/>
    </location>
</feature>
<feature type="strand" evidence="54">
    <location>
        <begin position="1911"/>
        <end position="1916"/>
    </location>
</feature>
<feature type="helix" evidence="54">
    <location>
        <begin position="1941"/>
        <end position="1951"/>
    </location>
</feature>
<feature type="strand" evidence="54">
    <location>
        <begin position="1961"/>
        <end position="1963"/>
    </location>
</feature>
<feature type="helix" evidence="54">
    <location>
        <begin position="1967"/>
        <end position="1976"/>
    </location>
</feature>
<feature type="strand" evidence="54">
    <location>
        <begin position="1983"/>
        <end position="1987"/>
    </location>
</feature>
<feature type="helix" evidence="54">
    <location>
        <begin position="1989"/>
        <end position="1995"/>
    </location>
</feature>
<feature type="helix" evidence="54">
    <location>
        <begin position="2005"/>
        <end position="2012"/>
    </location>
</feature>
<feature type="helix" evidence="54">
    <location>
        <begin position="2014"/>
        <end position="2020"/>
    </location>
</feature>
<feature type="turn" evidence="52">
    <location>
        <begin position="2021"/>
        <end position="2023"/>
    </location>
</feature>
<feature type="helix" evidence="54">
    <location>
        <begin position="2024"/>
        <end position="2027"/>
    </location>
</feature>
<feature type="strand" evidence="54">
    <location>
        <begin position="2028"/>
        <end position="2030"/>
    </location>
</feature>
<feature type="turn" evidence="54">
    <location>
        <begin position="2032"/>
        <end position="2034"/>
    </location>
</feature>
<feature type="strand" evidence="54">
    <location>
        <begin position="2038"/>
        <end position="2040"/>
    </location>
</feature>
<feature type="helix" evidence="54">
    <location>
        <begin position="2042"/>
        <end position="2066"/>
    </location>
</feature>
<feature type="helix" evidence="54">
    <location>
        <begin position="2070"/>
        <end position="2075"/>
    </location>
</feature>
<feature type="helix" evidence="54">
    <location>
        <begin position="2077"/>
        <end position="2090"/>
    </location>
</feature>
<feature type="strand" evidence="54">
    <location>
        <begin position="2092"/>
        <end position="2094"/>
    </location>
</feature>
<feature type="helix" evidence="54">
    <location>
        <begin position="2096"/>
        <end position="2121"/>
    </location>
</feature>
<feature type="helix" evidence="54">
    <location>
        <begin position="2130"/>
        <end position="2137"/>
    </location>
</feature>
<feature type="turn" evidence="53">
    <location>
        <begin position="2138"/>
        <end position="2140"/>
    </location>
</feature>
<feature type="helix" evidence="54">
    <location>
        <begin position="2181"/>
        <end position="2186"/>
    </location>
</feature>
<feature type="turn" evidence="53">
    <location>
        <begin position="2188"/>
        <end position="2190"/>
    </location>
</feature>
<feature type="helix" evidence="54">
    <location>
        <begin position="2193"/>
        <end position="2209"/>
    </location>
</feature>
<feature type="helix" evidence="54">
    <location>
        <begin position="2211"/>
        <end position="2217"/>
    </location>
</feature>
<feature type="strand" evidence="54">
    <location>
        <begin position="2218"/>
        <end position="2221"/>
    </location>
</feature>
<feature type="turn" evidence="54">
    <location>
        <begin position="2222"/>
        <end position="2225"/>
    </location>
</feature>
<feature type="strand" evidence="54">
    <location>
        <begin position="2226"/>
        <end position="2229"/>
    </location>
</feature>
<feature type="strand" evidence="54">
    <location>
        <begin position="2232"/>
        <end position="2234"/>
    </location>
</feature>
<feature type="strand" evidence="54">
    <location>
        <begin position="2238"/>
        <end position="2240"/>
    </location>
</feature>
<feature type="strand" evidence="54">
    <location>
        <begin position="2243"/>
        <end position="2247"/>
    </location>
</feature>
<feature type="helix" evidence="54">
    <location>
        <begin position="2249"/>
        <end position="2251"/>
    </location>
</feature>
<feature type="strand" evidence="54">
    <location>
        <begin position="2256"/>
        <end position="2260"/>
    </location>
</feature>
<feature type="strand" evidence="54">
    <location>
        <begin position="2306"/>
        <end position="2312"/>
    </location>
</feature>
<feature type="helix" evidence="54">
    <location>
        <begin position="2314"/>
        <end position="2317"/>
    </location>
</feature>
<feature type="strand" evidence="54">
    <location>
        <begin position="2324"/>
        <end position="2333"/>
    </location>
</feature>
<feature type="helix" evidence="54">
    <location>
        <begin position="2334"/>
        <end position="2343"/>
    </location>
</feature>
<feature type="helix" evidence="54">
    <location>
        <begin position="2346"/>
        <end position="2354"/>
    </location>
</feature>
<feature type="helix" evidence="54">
    <location>
        <begin position="2358"/>
        <end position="2366"/>
    </location>
</feature>
<feature type="helix" evidence="54">
    <location>
        <begin position="2371"/>
        <end position="2373"/>
    </location>
</feature>
<feature type="helix" evidence="54">
    <location>
        <begin position="2376"/>
        <end position="2390"/>
    </location>
</feature>
<feature type="helix" evidence="54">
    <location>
        <begin position="2395"/>
        <end position="2402"/>
    </location>
</feature>
<feature type="helix" evidence="54">
    <location>
        <begin position="2406"/>
        <end position="2419"/>
    </location>
</feature>
<feature type="helix" evidence="54">
    <location>
        <begin position="2421"/>
        <end position="2437"/>
    </location>
</feature>
<feature type="strand" evidence="54">
    <location>
        <begin position="2438"/>
        <end position="2441"/>
    </location>
</feature>
<feature type="strand" evidence="54">
    <location>
        <begin position="2447"/>
        <end position="2449"/>
    </location>
</feature>
<feature type="helix" evidence="54">
    <location>
        <begin position="2451"/>
        <end position="2454"/>
    </location>
</feature>
<feature type="helix" evidence="54">
    <location>
        <begin position="2458"/>
        <end position="2495"/>
    </location>
</feature>
<feature type="helix" evidence="54">
    <location>
        <begin position="2502"/>
        <end position="2507"/>
    </location>
</feature>
<feature type="strand" evidence="54">
    <location>
        <begin position="2531"/>
        <end position="2537"/>
    </location>
</feature>
<feature type="strand" evidence="54">
    <location>
        <begin position="2539"/>
        <end position="2547"/>
    </location>
</feature>
<feature type="helix" evidence="54">
    <location>
        <begin position="2548"/>
        <end position="2550"/>
    </location>
</feature>
<feature type="helix" evidence="54">
    <location>
        <begin position="2551"/>
        <end position="2563"/>
    </location>
</feature>
<feature type="strand" evidence="54">
    <location>
        <begin position="2574"/>
        <end position="2581"/>
    </location>
</feature>
<feature type="strand" evidence="54">
    <location>
        <begin position="2586"/>
        <end position="2588"/>
    </location>
</feature>
<evidence type="ECO:0000250" key="1">
    <source>
        <dbReference type="UniProtKB" id="O18475"/>
    </source>
</evidence>
<evidence type="ECO:0000250" key="2">
    <source>
        <dbReference type="UniProtKB" id="Q8CGS6"/>
    </source>
</evidence>
<evidence type="ECO:0000255" key="3">
    <source>
        <dbReference type="PROSITE-ProRule" id="PRU00541"/>
    </source>
</evidence>
<evidence type="ECO:0000255" key="4">
    <source>
        <dbReference type="PROSITE-ProRule" id="PRU00542"/>
    </source>
</evidence>
<evidence type="ECO:0000256" key="5">
    <source>
        <dbReference type="SAM" id="MobiDB-lite"/>
    </source>
</evidence>
<evidence type="ECO:0000269" key="6">
    <source>
    </source>
</evidence>
<evidence type="ECO:0000269" key="7">
    <source>
    </source>
</evidence>
<evidence type="ECO:0000269" key="8">
    <source>
    </source>
</evidence>
<evidence type="ECO:0000269" key="9">
    <source>
    </source>
</evidence>
<evidence type="ECO:0000269" key="10">
    <source>
    </source>
</evidence>
<evidence type="ECO:0000269" key="11">
    <source>
    </source>
</evidence>
<evidence type="ECO:0000269" key="12">
    <source>
    </source>
</evidence>
<evidence type="ECO:0000269" key="13">
    <source>
    </source>
</evidence>
<evidence type="ECO:0000269" key="14">
    <source>
    </source>
</evidence>
<evidence type="ECO:0000269" key="15">
    <source>
    </source>
</evidence>
<evidence type="ECO:0000269" key="16">
    <source>
    </source>
</evidence>
<evidence type="ECO:0000269" key="17">
    <source>
    </source>
</evidence>
<evidence type="ECO:0000269" key="18">
    <source>
    </source>
</evidence>
<evidence type="ECO:0000269" key="19">
    <source>
    </source>
</evidence>
<evidence type="ECO:0000269" key="20">
    <source>
    </source>
</evidence>
<evidence type="ECO:0000269" key="21">
    <source>
    </source>
</evidence>
<evidence type="ECO:0000269" key="22">
    <source>
    </source>
</evidence>
<evidence type="ECO:0000269" key="23">
    <source>
    </source>
</evidence>
<evidence type="ECO:0000269" key="24">
    <source>
    </source>
</evidence>
<evidence type="ECO:0000269" key="25">
    <source>
    </source>
</evidence>
<evidence type="ECO:0000269" key="26">
    <source>
    </source>
</evidence>
<evidence type="ECO:0000269" key="27">
    <source>
    </source>
</evidence>
<evidence type="ECO:0000269" key="28">
    <source>
    </source>
</evidence>
<evidence type="ECO:0000269" key="29">
    <source>
    </source>
</evidence>
<evidence type="ECO:0000269" key="30">
    <source>
    </source>
</evidence>
<evidence type="ECO:0000269" key="31">
    <source>
    </source>
</evidence>
<evidence type="ECO:0000269" key="32">
    <source>
    </source>
</evidence>
<evidence type="ECO:0000269" key="33">
    <source>
    </source>
</evidence>
<evidence type="ECO:0000303" key="34">
    <source>
    </source>
</evidence>
<evidence type="ECO:0000303" key="35">
    <source>
    </source>
</evidence>
<evidence type="ECO:0000303" key="36">
    <source ref="4"/>
</evidence>
<evidence type="ECO:0000305" key="37"/>
<evidence type="ECO:0000305" key="38">
    <source>
    </source>
</evidence>
<evidence type="ECO:0000305" key="39">
    <source>
    </source>
</evidence>
<evidence type="ECO:0000305" key="40">
    <source>
    </source>
</evidence>
<evidence type="ECO:0000305" key="41">
    <source>
    </source>
</evidence>
<evidence type="ECO:0000305" key="42">
    <source>
    </source>
</evidence>
<evidence type="ECO:0000312" key="43">
    <source>
        <dbReference type="HGNC" id="HGNC:9186"/>
    </source>
</evidence>
<evidence type="ECO:0007744" key="44">
    <source>
        <dbReference type="PDB" id="4X0P"/>
    </source>
</evidence>
<evidence type="ECO:0007744" key="45">
    <source>
        <dbReference type="PDB" id="4X0Q"/>
    </source>
</evidence>
<evidence type="ECO:0007744" key="46">
    <source>
        <dbReference type="PDB" id="5A9F"/>
    </source>
</evidence>
<evidence type="ECO:0007744" key="47">
    <source>
        <dbReference type="PDB" id="5A9J"/>
    </source>
</evidence>
<evidence type="ECO:0007744" key="48">
    <source>
        <dbReference type="PDB" id="5AGA"/>
    </source>
</evidence>
<evidence type="ECO:0007744" key="49">
    <source>
        <dbReference type="PDB" id="6XBU"/>
    </source>
</evidence>
<evidence type="ECO:0007744" key="50">
    <source>
    </source>
</evidence>
<evidence type="ECO:0007829" key="51">
    <source>
        <dbReference type="PDB" id="5AGA"/>
    </source>
</evidence>
<evidence type="ECO:0007829" key="52">
    <source>
        <dbReference type="PDB" id="6XBU"/>
    </source>
</evidence>
<evidence type="ECO:0007829" key="53">
    <source>
        <dbReference type="PDB" id="8E23"/>
    </source>
</evidence>
<evidence type="ECO:0007829" key="54">
    <source>
        <dbReference type="PDB" id="8E24"/>
    </source>
</evidence>
<evidence type="ECO:0007829" key="55">
    <source>
        <dbReference type="PDB" id="9C5Q"/>
    </source>
</evidence>
<name>DPOLQ_HUMAN</name>